<dbReference type="EC" id="2.3.1.48" evidence="23"/>
<dbReference type="EC" id="2.3.1.-" evidence="23 2"/>
<dbReference type="EMBL" id="AC102262">
    <property type="status" value="NOT_ANNOTATED_CDS"/>
    <property type="molecule type" value="Genomic_DNA"/>
</dbReference>
<dbReference type="EMBL" id="AC160528">
    <property type="status" value="NOT_ANNOTATED_CDS"/>
    <property type="molecule type" value="Genomic_DNA"/>
</dbReference>
<dbReference type="EMBL" id="BC144976">
    <property type="protein sequence ID" value="AAI44977.1"/>
    <property type="molecule type" value="mRNA"/>
</dbReference>
<dbReference type="EMBL" id="BC150681">
    <property type="protein sequence ID" value="AAI50682.1"/>
    <property type="molecule type" value="mRNA"/>
</dbReference>
<dbReference type="CCDS" id="CCDS37149.1"/>
<dbReference type="RefSeq" id="NP_808489.4">
    <property type="nucleotide sequence ID" value="NM_177821.6"/>
</dbReference>
<dbReference type="BMRB" id="B2RWS6"/>
<dbReference type="SMR" id="B2RWS6"/>
<dbReference type="BioGRID" id="236625">
    <property type="interactions" value="95"/>
</dbReference>
<dbReference type="CORUM" id="B2RWS6"/>
<dbReference type="DIP" id="DIP-60610N"/>
<dbReference type="FunCoup" id="B2RWS6">
    <property type="interactions" value="5256"/>
</dbReference>
<dbReference type="IntAct" id="B2RWS6">
    <property type="interactions" value="10"/>
</dbReference>
<dbReference type="MINT" id="B2RWS6"/>
<dbReference type="STRING" id="10090.ENSMUSP00000066789"/>
<dbReference type="GlyGen" id="B2RWS6">
    <property type="glycosylation" value="17 sites, 4 N-linked glycans (4 sites), 1 O-linked glycan (3 sites)"/>
</dbReference>
<dbReference type="iPTMnet" id="B2RWS6"/>
<dbReference type="PhosphoSitePlus" id="B2RWS6"/>
<dbReference type="SwissPalm" id="B2RWS6"/>
<dbReference type="jPOST" id="B2RWS6"/>
<dbReference type="PaxDb" id="10090-ENSMUSP00000066789"/>
<dbReference type="PeptideAtlas" id="B2RWS6"/>
<dbReference type="ProteomicsDB" id="275928"/>
<dbReference type="Pumba" id="B2RWS6"/>
<dbReference type="Antibodypedia" id="296">
    <property type="antibodies" value="1018 antibodies from 40 providers"/>
</dbReference>
<dbReference type="DNASU" id="328572"/>
<dbReference type="Ensembl" id="ENSMUST00000068387.11">
    <property type="protein sequence ID" value="ENSMUSP00000066789.5"/>
    <property type="gene ID" value="ENSMUSG00000055024.13"/>
</dbReference>
<dbReference type="GeneID" id="328572"/>
<dbReference type="KEGG" id="mmu:328572"/>
<dbReference type="UCSC" id="uc007wws.1">
    <property type="organism name" value="mouse"/>
</dbReference>
<dbReference type="AGR" id="MGI:1276116"/>
<dbReference type="CTD" id="2033"/>
<dbReference type="MGI" id="MGI:1276116">
    <property type="gene designation" value="Ep300"/>
</dbReference>
<dbReference type="VEuPathDB" id="HostDB:ENSMUSG00000055024"/>
<dbReference type="eggNOG" id="KOG1778">
    <property type="taxonomic scope" value="Eukaryota"/>
</dbReference>
<dbReference type="GeneTree" id="ENSGT00940000155497"/>
<dbReference type="HOGENOM" id="CLU_000162_2_0_1"/>
<dbReference type="InParanoid" id="B2RWS6"/>
<dbReference type="OMA" id="LMMHHAY"/>
<dbReference type="OrthoDB" id="899at2759"/>
<dbReference type="PhylomeDB" id="B2RWS6"/>
<dbReference type="TreeFam" id="TF101097"/>
<dbReference type="BRENDA" id="2.3.1.48">
    <property type="organism ID" value="3474"/>
</dbReference>
<dbReference type="Reactome" id="R-MMU-1234158">
    <property type="pathway name" value="Regulation of gene expression by Hypoxia-inducible Factor"/>
</dbReference>
<dbReference type="Reactome" id="R-MMU-201722">
    <property type="pathway name" value="Formation of the beta-catenin:TCF transactivating complex"/>
</dbReference>
<dbReference type="Reactome" id="R-MMU-2122947">
    <property type="pathway name" value="NOTCH1 Intracellular Domain Regulates Transcription"/>
</dbReference>
<dbReference type="Reactome" id="R-MMU-3134973">
    <property type="pathway name" value="LRR FLII-interacting protein 1 (LRRFIP1) activates type I IFN production"/>
</dbReference>
<dbReference type="Reactome" id="R-MMU-3371568">
    <property type="pathway name" value="Attenuation phase"/>
</dbReference>
<dbReference type="Reactome" id="R-MMU-3899300">
    <property type="pathway name" value="SUMOylation of transcription cofactors"/>
</dbReference>
<dbReference type="Reactome" id="R-MMU-5250924">
    <property type="pathway name" value="B-WICH complex positively regulates rRNA expression"/>
</dbReference>
<dbReference type="Reactome" id="R-MMU-5621575">
    <property type="pathway name" value="CD209 (DC-SIGN) signaling"/>
</dbReference>
<dbReference type="Reactome" id="R-MMU-5689901">
    <property type="pathway name" value="Metalloprotease DUBs"/>
</dbReference>
<dbReference type="Reactome" id="R-MMU-6804758">
    <property type="pathway name" value="Regulation of TP53 Activity through Acetylation"/>
</dbReference>
<dbReference type="Reactome" id="R-MMU-6804760">
    <property type="pathway name" value="Regulation of TP53 Activity through Methylation"/>
</dbReference>
<dbReference type="Reactome" id="R-MMU-6811555">
    <property type="pathway name" value="PI5P Regulates TP53 Acetylation"/>
</dbReference>
<dbReference type="Reactome" id="R-MMU-8866907">
    <property type="pathway name" value="Activation of the TFAP2 (AP-2) family of transcription factors"/>
</dbReference>
<dbReference type="Reactome" id="R-MMU-8936459">
    <property type="pathway name" value="RUNX1 regulates genes involved in megakaryocyte differentiation and platelet function"/>
</dbReference>
<dbReference type="Reactome" id="R-MMU-8939243">
    <property type="pathway name" value="RUNX1 interacts with co-factors whose precise effect on RUNX1 targets is not known"/>
</dbReference>
<dbReference type="Reactome" id="R-MMU-8941856">
    <property type="pathway name" value="RUNX3 regulates NOTCH signaling"/>
</dbReference>
<dbReference type="Reactome" id="R-MMU-8941858">
    <property type="pathway name" value="Regulation of RUNX3 expression and activity"/>
</dbReference>
<dbReference type="Reactome" id="R-MMU-8951936">
    <property type="pathway name" value="RUNX3 regulates p14-ARF"/>
</dbReference>
<dbReference type="Reactome" id="R-MMU-9018519">
    <property type="pathway name" value="Estrogen-dependent gene expression"/>
</dbReference>
<dbReference type="Reactome" id="R-MMU-9029569">
    <property type="pathway name" value="NR1H3 &amp; NR1H2 regulate gene expression linked to cholesterol transport and efflux"/>
</dbReference>
<dbReference type="Reactome" id="R-MMU-933541">
    <property type="pathway name" value="TRAF6 mediated IRF7 activation"/>
</dbReference>
<dbReference type="Reactome" id="R-MMU-9617629">
    <property type="pathway name" value="Regulation of FOXO transcriptional activity by acetylation"/>
</dbReference>
<dbReference type="Reactome" id="R-MMU-9701898">
    <property type="pathway name" value="STAT3 nuclear events downstream of ALK signaling"/>
</dbReference>
<dbReference type="Reactome" id="R-MMU-9759194">
    <property type="pathway name" value="Nuclear events mediated by NFE2L2"/>
</dbReference>
<dbReference type="Reactome" id="R-MMU-9856649">
    <property type="pathway name" value="Transcriptional and post-translational regulation of MITF-M expression and activity"/>
</dbReference>
<dbReference type="BioGRID-ORCS" id="328572">
    <property type="hits" value="19 hits in 88 CRISPR screens"/>
</dbReference>
<dbReference type="ChiTaRS" id="Ep300">
    <property type="organism name" value="mouse"/>
</dbReference>
<dbReference type="PRO" id="PR:B2RWS6"/>
<dbReference type="Proteomes" id="UP000000589">
    <property type="component" value="Chromosome 15"/>
</dbReference>
<dbReference type="RNAct" id="B2RWS6">
    <property type="molecule type" value="protein"/>
</dbReference>
<dbReference type="Bgee" id="ENSMUSG00000055024">
    <property type="expression patterns" value="Expressed in embryonic post-anal tail and 224 other cell types or tissues"/>
</dbReference>
<dbReference type="ExpressionAtlas" id="B2RWS6">
    <property type="expression patterns" value="baseline and differential"/>
</dbReference>
<dbReference type="GO" id="GO:0005829">
    <property type="term" value="C:cytosol"/>
    <property type="evidence" value="ECO:0007669"/>
    <property type="project" value="Ensembl"/>
</dbReference>
<dbReference type="GO" id="GO:0000123">
    <property type="term" value="C:histone acetyltransferase complex"/>
    <property type="evidence" value="ECO:0000314"/>
    <property type="project" value="MGI"/>
</dbReference>
<dbReference type="GO" id="GO:0005654">
    <property type="term" value="C:nucleoplasm"/>
    <property type="evidence" value="ECO:0000304"/>
    <property type="project" value="Reactome"/>
</dbReference>
<dbReference type="GO" id="GO:0005634">
    <property type="term" value="C:nucleus"/>
    <property type="evidence" value="ECO:0000250"/>
    <property type="project" value="UniProtKB"/>
</dbReference>
<dbReference type="GO" id="GO:0032991">
    <property type="term" value="C:protein-containing complex"/>
    <property type="evidence" value="ECO:0000314"/>
    <property type="project" value="MGI"/>
</dbReference>
<dbReference type="GO" id="GO:0005667">
    <property type="term" value="C:transcription regulator complex"/>
    <property type="evidence" value="ECO:0000314"/>
    <property type="project" value="UniProtKB"/>
</dbReference>
<dbReference type="GO" id="GO:0140033">
    <property type="term" value="F:acetylation-dependent protein binding"/>
    <property type="evidence" value="ECO:0007669"/>
    <property type="project" value="Ensembl"/>
</dbReference>
<dbReference type="GO" id="GO:0016407">
    <property type="term" value="F:acetyltransferase activity"/>
    <property type="evidence" value="ECO:0000314"/>
    <property type="project" value="UniProtKB"/>
</dbReference>
<dbReference type="GO" id="GO:0008013">
    <property type="term" value="F:beta-catenin binding"/>
    <property type="evidence" value="ECO:0007669"/>
    <property type="project" value="Ensembl"/>
</dbReference>
<dbReference type="GO" id="GO:0003682">
    <property type="term" value="F:chromatin binding"/>
    <property type="evidence" value="ECO:0000314"/>
    <property type="project" value="UniProtKB"/>
</dbReference>
<dbReference type="GO" id="GO:0031490">
    <property type="term" value="F:chromatin DNA binding"/>
    <property type="evidence" value="ECO:0000314"/>
    <property type="project" value="MGI"/>
</dbReference>
<dbReference type="GO" id="GO:0003684">
    <property type="term" value="F:damaged DNA binding"/>
    <property type="evidence" value="ECO:0000250"/>
    <property type="project" value="UniProtKB"/>
</dbReference>
<dbReference type="GO" id="GO:0003677">
    <property type="term" value="F:DNA binding"/>
    <property type="evidence" value="ECO:0000314"/>
    <property type="project" value="MGI"/>
</dbReference>
<dbReference type="GO" id="GO:0140297">
    <property type="term" value="F:DNA-binding transcription factor binding"/>
    <property type="evidence" value="ECO:0000353"/>
    <property type="project" value="UniProtKB"/>
</dbReference>
<dbReference type="GO" id="GO:0004402">
    <property type="term" value="F:histone acetyltransferase activity"/>
    <property type="evidence" value="ECO:0000314"/>
    <property type="project" value="UniProtKB"/>
</dbReference>
<dbReference type="GO" id="GO:0140069">
    <property type="term" value="F:histone butyryltransferase activity"/>
    <property type="evidence" value="ECO:0000314"/>
    <property type="project" value="UniProtKB"/>
</dbReference>
<dbReference type="GO" id="GO:0140068">
    <property type="term" value="F:histone crotonyltransferase activity"/>
    <property type="evidence" value="ECO:0000250"/>
    <property type="project" value="UniProtKB"/>
</dbReference>
<dbReference type="GO" id="GO:0044013">
    <property type="term" value="F:histone H2B acetyltransferase activity"/>
    <property type="evidence" value="ECO:0007669"/>
    <property type="project" value="Ensembl"/>
</dbReference>
<dbReference type="GO" id="GO:0140908">
    <property type="term" value="F:histone H3K122 acetyltransferase activity"/>
    <property type="evidence" value="ECO:0000250"/>
    <property type="project" value="UniProtKB"/>
</dbReference>
<dbReference type="GO" id="GO:0043993">
    <property type="term" value="F:histone H3K18 acetyltransferase activity"/>
    <property type="evidence" value="ECO:0000250"/>
    <property type="project" value="UniProtKB"/>
</dbReference>
<dbReference type="GO" id="GO:0044017">
    <property type="term" value="F:histone H3K27 acetyltransferase activity"/>
    <property type="evidence" value="ECO:0000250"/>
    <property type="project" value="UniProtKB"/>
</dbReference>
<dbReference type="GO" id="GO:0010485">
    <property type="term" value="F:histone H4 acetyltransferase activity"/>
    <property type="evidence" value="ECO:0000250"/>
    <property type="project" value="UniProtKB"/>
</dbReference>
<dbReference type="GO" id="GO:0120301">
    <property type="term" value="F:histone lactyltransferase (CoA-dependent) activity"/>
    <property type="evidence" value="ECO:0000250"/>
    <property type="project" value="UniProtKB"/>
</dbReference>
<dbReference type="GO" id="GO:0004468">
    <property type="term" value="F:L-lysine N-acetyltransferase activity, acting on acetyl phosphate as donor"/>
    <property type="evidence" value="ECO:0000250"/>
    <property type="project" value="UniProtKB"/>
</dbReference>
<dbReference type="GO" id="GO:0051059">
    <property type="term" value="F:NF-kappaB binding"/>
    <property type="evidence" value="ECO:0007669"/>
    <property type="project" value="Ensembl"/>
</dbReference>
<dbReference type="GO" id="GO:0050681">
    <property type="term" value="F:nuclear androgen receptor binding"/>
    <property type="evidence" value="ECO:0007669"/>
    <property type="project" value="Ensembl"/>
</dbReference>
<dbReference type="GO" id="GO:0002039">
    <property type="term" value="F:p53 binding"/>
    <property type="evidence" value="ECO:0000353"/>
    <property type="project" value="MGI"/>
</dbReference>
<dbReference type="GO" id="GO:0106226">
    <property type="term" value="F:peptide 2-hydroxyisobutyryltransferase activity"/>
    <property type="evidence" value="ECO:0007669"/>
    <property type="project" value="RHEA"/>
</dbReference>
<dbReference type="GO" id="GO:0097157">
    <property type="term" value="F:pre-mRNA intronic binding"/>
    <property type="evidence" value="ECO:0000314"/>
    <property type="project" value="MGI"/>
</dbReference>
<dbReference type="GO" id="GO:0061920">
    <property type="term" value="F:protein propionyltransferase activity"/>
    <property type="evidence" value="ECO:0000250"/>
    <property type="project" value="UniProtKB"/>
</dbReference>
<dbReference type="GO" id="GO:0061733">
    <property type="term" value="F:protein-lysine-acetyltransferase activity"/>
    <property type="evidence" value="ECO:0000314"/>
    <property type="project" value="UniProtKB"/>
</dbReference>
<dbReference type="GO" id="GO:0061629">
    <property type="term" value="F:RNA polymerase II-specific DNA-binding transcription factor binding"/>
    <property type="evidence" value="ECO:0000353"/>
    <property type="project" value="MGI"/>
</dbReference>
<dbReference type="GO" id="GO:0097677">
    <property type="term" value="F:STAT family protein binding"/>
    <property type="evidence" value="ECO:0007669"/>
    <property type="project" value="Ensembl"/>
</dbReference>
<dbReference type="GO" id="GO:0003713">
    <property type="term" value="F:transcription coactivator activity"/>
    <property type="evidence" value="ECO:0000314"/>
    <property type="project" value="MGI"/>
</dbReference>
<dbReference type="GO" id="GO:0001223">
    <property type="term" value="F:transcription coactivator binding"/>
    <property type="evidence" value="ECO:0000353"/>
    <property type="project" value="UniProtKB"/>
</dbReference>
<dbReference type="GO" id="GO:0008270">
    <property type="term" value="F:zinc ion binding"/>
    <property type="evidence" value="ECO:0007669"/>
    <property type="project" value="UniProtKB-KW"/>
</dbReference>
<dbReference type="GO" id="GO:0009887">
    <property type="term" value="P:animal organ morphogenesis"/>
    <property type="evidence" value="ECO:0000315"/>
    <property type="project" value="MGI"/>
</dbReference>
<dbReference type="GO" id="GO:0006915">
    <property type="term" value="P:apoptotic process"/>
    <property type="evidence" value="ECO:0000250"/>
    <property type="project" value="UniProtKB"/>
</dbReference>
<dbReference type="GO" id="GO:0030183">
    <property type="term" value="P:B cell differentiation"/>
    <property type="evidence" value="ECO:0000315"/>
    <property type="project" value="MGI"/>
</dbReference>
<dbReference type="GO" id="GO:0002209">
    <property type="term" value="P:behavioral defense response"/>
    <property type="evidence" value="ECO:0000315"/>
    <property type="project" value="ARUK-UCL"/>
</dbReference>
<dbReference type="GO" id="GO:0007249">
    <property type="term" value="P:canonical NF-kappaB signal transduction"/>
    <property type="evidence" value="ECO:0007669"/>
    <property type="project" value="Ensembl"/>
</dbReference>
<dbReference type="GO" id="GO:0051216">
    <property type="term" value="P:cartilage development"/>
    <property type="evidence" value="ECO:0000303"/>
    <property type="project" value="UniProtKB"/>
</dbReference>
<dbReference type="GO" id="GO:0071233">
    <property type="term" value="P:cellular response to L-leucine"/>
    <property type="evidence" value="ECO:0000250"/>
    <property type="project" value="UniProtKB"/>
</dbReference>
<dbReference type="GO" id="GO:0031669">
    <property type="term" value="P:cellular response to nutrient levels"/>
    <property type="evidence" value="ECO:0007669"/>
    <property type="project" value="Ensembl"/>
</dbReference>
<dbReference type="GO" id="GO:0034644">
    <property type="term" value="P:cellular response to UV"/>
    <property type="evidence" value="ECO:0000250"/>
    <property type="project" value="UniProtKB"/>
</dbReference>
<dbReference type="GO" id="GO:0006338">
    <property type="term" value="P:chromatin remodeling"/>
    <property type="evidence" value="ECO:0000315"/>
    <property type="project" value="UniProtKB"/>
</dbReference>
<dbReference type="GO" id="GO:0007623">
    <property type="term" value="P:circadian rhythm"/>
    <property type="evidence" value="ECO:0000314"/>
    <property type="project" value="UniProtKB"/>
</dbReference>
<dbReference type="GO" id="GO:0060325">
    <property type="term" value="P:face morphogenesis"/>
    <property type="evidence" value="ECO:0000315"/>
    <property type="project" value="ARUK-UCL"/>
</dbReference>
<dbReference type="GO" id="GO:0045444">
    <property type="term" value="P:fat cell differentiation"/>
    <property type="evidence" value="ECO:0000315"/>
    <property type="project" value="UniProtKB"/>
</dbReference>
<dbReference type="GO" id="GO:0007507">
    <property type="term" value="P:heart development"/>
    <property type="evidence" value="ECO:0000315"/>
    <property type="project" value="MGI"/>
</dbReference>
<dbReference type="GO" id="GO:0006475">
    <property type="term" value="P:internal protein amino acid acetylation"/>
    <property type="evidence" value="ECO:0000250"/>
    <property type="project" value="UniProtKB"/>
</dbReference>
<dbReference type="GO" id="GO:0042771">
    <property type="term" value="P:intrinsic apoptotic signaling pathway in response to DNA damage by p53 class mediator"/>
    <property type="evidence" value="ECO:0007669"/>
    <property type="project" value="Ensembl"/>
</dbReference>
<dbReference type="GO" id="GO:0007611">
    <property type="term" value="P:learning or memory"/>
    <property type="evidence" value="ECO:0000315"/>
    <property type="project" value="ARUK-UCL"/>
</dbReference>
<dbReference type="GO" id="GO:0030324">
    <property type="term" value="P:lung development"/>
    <property type="evidence" value="ECO:0000315"/>
    <property type="project" value="MGI"/>
</dbReference>
<dbReference type="GO" id="GO:0035855">
    <property type="term" value="P:megakaryocyte development"/>
    <property type="evidence" value="ECO:0000315"/>
    <property type="project" value="MGI"/>
</dbReference>
<dbReference type="GO" id="GO:0035264">
    <property type="term" value="P:multicellular organism growth"/>
    <property type="evidence" value="ECO:0000315"/>
    <property type="project" value="ARUK-UCL"/>
</dbReference>
<dbReference type="GO" id="GO:0018076">
    <property type="term" value="P:N-terminal peptidyl-lysine acetylation"/>
    <property type="evidence" value="ECO:0000250"/>
    <property type="project" value="UniProtKB"/>
</dbReference>
<dbReference type="GO" id="GO:0010507">
    <property type="term" value="P:negative regulation of autophagy"/>
    <property type="evidence" value="ECO:0007669"/>
    <property type="project" value="Ensembl"/>
</dbReference>
<dbReference type="GO" id="GO:0045721">
    <property type="term" value="P:negative regulation of gluconeogenesis"/>
    <property type="evidence" value="ECO:0007669"/>
    <property type="project" value="Ensembl"/>
</dbReference>
<dbReference type="GO" id="GO:0032460">
    <property type="term" value="P:negative regulation of protein oligomerization"/>
    <property type="evidence" value="ECO:0007669"/>
    <property type="project" value="Ensembl"/>
</dbReference>
<dbReference type="GO" id="GO:0000122">
    <property type="term" value="P:negative regulation of transcription by RNA polymerase II"/>
    <property type="evidence" value="ECO:0000250"/>
    <property type="project" value="UniProtKB"/>
</dbReference>
<dbReference type="GO" id="GO:0140067">
    <property type="term" value="P:peptidyl-lysine butyrylation"/>
    <property type="evidence" value="ECO:0000314"/>
    <property type="project" value="UniProtKB"/>
</dbReference>
<dbReference type="GO" id="GO:0140066">
    <property type="term" value="P:peptidyl-lysine crotonylation"/>
    <property type="evidence" value="ECO:0000250"/>
    <property type="project" value="UniProtKB"/>
</dbReference>
<dbReference type="GO" id="GO:0061921">
    <property type="term" value="P:peptidyl-lysine propionylation"/>
    <property type="evidence" value="ECO:0000250"/>
    <property type="project" value="UniProtKB"/>
</dbReference>
<dbReference type="GO" id="GO:0030220">
    <property type="term" value="P:platelet formation"/>
    <property type="evidence" value="ECO:0000315"/>
    <property type="project" value="MGI"/>
</dbReference>
<dbReference type="GO" id="GO:0043923">
    <property type="term" value="P:positive regulation by host of viral transcription"/>
    <property type="evidence" value="ECO:0007669"/>
    <property type="project" value="Ensembl"/>
</dbReference>
<dbReference type="GO" id="GO:0051091">
    <property type="term" value="P:positive regulation of DNA-binding transcription factor activity"/>
    <property type="evidence" value="ECO:0000250"/>
    <property type="project" value="UniProtKB"/>
</dbReference>
<dbReference type="GO" id="GO:0045893">
    <property type="term" value="P:positive regulation of DNA-templated transcription"/>
    <property type="evidence" value="ECO:0000314"/>
    <property type="project" value="UniProtKB"/>
</dbReference>
<dbReference type="GO" id="GO:0010628">
    <property type="term" value="P:positive regulation of gene expression"/>
    <property type="evidence" value="ECO:0000316"/>
    <property type="project" value="MGI"/>
</dbReference>
<dbReference type="GO" id="GO:0010976">
    <property type="term" value="P:positive regulation of neuron projection development"/>
    <property type="evidence" value="ECO:0007669"/>
    <property type="project" value="Ensembl"/>
</dbReference>
<dbReference type="GO" id="GO:0042307">
    <property type="term" value="P:positive regulation of protein import into nucleus"/>
    <property type="evidence" value="ECO:0007669"/>
    <property type="project" value="Ensembl"/>
</dbReference>
<dbReference type="GO" id="GO:0046427">
    <property type="term" value="P:positive regulation of receptor signaling pathway via JAK-STAT"/>
    <property type="evidence" value="ECO:0007669"/>
    <property type="project" value="Ensembl"/>
</dbReference>
<dbReference type="GO" id="GO:2000330">
    <property type="term" value="P:positive regulation of T-helper 17 cell lineage commitment"/>
    <property type="evidence" value="ECO:0007669"/>
    <property type="project" value="Ensembl"/>
</dbReference>
<dbReference type="GO" id="GO:1904263">
    <property type="term" value="P:positive regulation of TORC1 signaling"/>
    <property type="evidence" value="ECO:0000250"/>
    <property type="project" value="UniProtKB"/>
</dbReference>
<dbReference type="GO" id="GO:1904515">
    <property type="term" value="P:positive regulation of TORC2 signaling"/>
    <property type="evidence" value="ECO:0000250"/>
    <property type="project" value="UniProtKB"/>
</dbReference>
<dbReference type="GO" id="GO:0045944">
    <property type="term" value="P:positive regulation of transcription by RNA polymerase II"/>
    <property type="evidence" value="ECO:0000314"/>
    <property type="project" value="UniProtKB"/>
</dbReference>
<dbReference type="GO" id="GO:0030511">
    <property type="term" value="P:positive regulation of transforming growth factor beta receptor signaling pathway"/>
    <property type="evidence" value="ECO:0007669"/>
    <property type="project" value="Ensembl"/>
</dbReference>
<dbReference type="GO" id="GO:0006473">
    <property type="term" value="P:protein acetylation"/>
    <property type="evidence" value="ECO:0000314"/>
    <property type="project" value="UniProtKB"/>
</dbReference>
<dbReference type="GO" id="GO:0031648">
    <property type="term" value="P:protein destabilization"/>
    <property type="evidence" value="ECO:0000250"/>
    <property type="project" value="UniProtKB"/>
</dbReference>
<dbReference type="GO" id="GO:0050821">
    <property type="term" value="P:protein stabilization"/>
    <property type="evidence" value="ECO:0000314"/>
    <property type="project" value="UniProtKB"/>
</dbReference>
<dbReference type="GO" id="GO:0060765">
    <property type="term" value="P:regulation of androgen receptor signaling pathway"/>
    <property type="evidence" value="ECO:0007669"/>
    <property type="project" value="Ensembl"/>
</dbReference>
<dbReference type="GO" id="GO:0006110">
    <property type="term" value="P:regulation of glycolytic process"/>
    <property type="evidence" value="ECO:0000250"/>
    <property type="project" value="UniProtKB"/>
</dbReference>
<dbReference type="GO" id="GO:0010821">
    <property type="term" value="P:regulation of mitochondrion organization"/>
    <property type="evidence" value="ECO:0000315"/>
    <property type="project" value="UniProtKB"/>
</dbReference>
<dbReference type="GO" id="GO:0006357">
    <property type="term" value="P:regulation of transcription by RNA polymerase II"/>
    <property type="evidence" value="ECO:0000314"/>
    <property type="project" value="MGI"/>
</dbReference>
<dbReference type="GO" id="GO:0090043">
    <property type="term" value="P:regulation of tubulin deacetylation"/>
    <property type="evidence" value="ECO:0000250"/>
    <property type="project" value="UniProtKB"/>
</dbReference>
<dbReference type="GO" id="GO:0043627">
    <property type="term" value="P:response to estrogen"/>
    <property type="evidence" value="ECO:0000250"/>
    <property type="project" value="UniProtKB"/>
</dbReference>
<dbReference type="GO" id="GO:0001666">
    <property type="term" value="P:response to hypoxia"/>
    <property type="evidence" value="ECO:0000250"/>
    <property type="project" value="UniProtKB"/>
</dbReference>
<dbReference type="GO" id="GO:0007519">
    <property type="term" value="P:skeletal muscle tissue development"/>
    <property type="evidence" value="ECO:0000315"/>
    <property type="project" value="MGI"/>
</dbReference>
<dbReference type="GO" id="GO:0001756">
    <property type="term" value="P:somitogenesis"/>
    <property type="evidence" value="ECO:0000316"/>
    <property type="project" value="MGI"/>
</dbReference>
<dbReference type="GO" id="GO:0036268">
    <property type="term" value="P:swimming"/>
    <property type="evidence" value="ECO:0000315"/>
    <property type="project" value="ARUK-UCL"/>
</dbReference>
<dbReference type="GO" id="GO:0001966">
    <property type="term" value="P:thigmotaxis"/>
    <property type="evidence" value="ECO:0000315"/>
    <property type="project" value="ARUK-UCL"/>
</dbReference>
<dbReference type="GO" id="GO:0006366">
    <property type="term" value="P:transcription by RNA polymerase II"/>
    <property type="evidence" value="ECO:0000316"/>
    <property type="project" value="MGI"/>
</dbReference>
<dbReference type="GO" id="GO:0045815">
    <property type="term" value="P:transcription initiation-coupled chromatin remodeling"/>
    <property type="evidence" value="ECO:0000250"/>
    <property type="project" value="UniProtKB"/>
</dbReference>
<dbReference type="CDD" id="cd05495">
    <property type="entry name" value="Bromo_cbp_like"/>
    <property type="match status" value="1"/>
</dbReference>
<dbReference type="CDD" id="cd20910">
    <property type="entry name" value="NCBD_CREBBP-p300_like"/>
    <property type="match status" value="1"/>
</dbReference>
<dbReference type="CDD" id="cd15646">
    <property type="entry name" value="PHD_p300"/>
    <property type="match status" value="1"/>
</dbReference>
<dbReference type="CDD" id="cd15802">
    <property type="entry name" value="RING_CBP-p300"/>
    <property type="match status" value="1"/>
</dbReference>
<dbReference type="CDD" id="cd02337">
    <property type="entry name" value="ZZ_CBP"/>
    <property type="match status" value="1"/>
</dbReference>
<dbReference type="FunFam" id="1.10.246.20:FF:000001">
    <property type="entry name" value="E1A binding protein p300"/>
    <property type="match status" value="1"/>
</dbReference>
<dbReference type="FunFam" id="1.20.1020.10:FF:000001">
    <property type="entry name" value="E1A binding protein p300"/>
    <property type="match status" value="1"/>
</dbReference>
<dbReference type="FunFam" id="1.20.1020.10:FF:000002">
    <property type="entry name" value="E1A binding protein p300"/>
    <property type="match status" value="1"/>
</dbReference>
<dbReference type="FunFam" id="2.10.110.40:FF:000001">
    <property type="entry name" value="E1A binding protein p300"/>
    <property type="match status" value="1"/>
</dbReference>
<dbReference type="FunFam" id="3.30.60.90:FF:000003">
    <property type="entry name" value="E1A binding protein p300"/>
    <property type="match status" value="1"/>
</dbReference>
<dbReference type="FunFam" id="1.20.920.10:FF:000001">
    <property type="entry name" value="Histone acetyltransferase p300"/>
    <property type="match status" value="1"/>
</dbReference>
<dbReference type="FunFam" id="3.30.40.10:FF:000034">
    <property type="entry name" value="Histone acetyltransferase p300"/>
    <property type="match status" value="1"/>
</dbReference>
<dbReference type="Gene3D" id="2.10.110.40">
    <property type="match status" value="1"/>
</dbReference>
<dbReference type="Gene3D" id="3.30.60.90">
    <property type="match status" value="1"/>
</dbReference>
<dbReference type="Gene3D" id="1.20.920.10">
    <property type="entry name" value="Bromodomain-like"/>
    <property type="match status" value="1"/>
</dbReference>
<dbReference type="Gene3D" id="1.10.246.20">
    <property type="entry name" value="Coactivator CBP, KIX domain"/>
    <property type="match status" value="1"/>
</dbReference>
<dbReference type="Gene3D" id="1.10.1630.10">
    <property type="entry name" value="Nuclear receptor coactivator, CREB-bp-like, interlocking domain"/>
    <property type="match status" value="1"/>
</dbReference>
<dbReference type="Gene3D" id="1.20.1020.10">
    <property type="entry name" value="TAZ domain"/>
    <property type="match status" value="2"/>
</dbReference>
<dbReference type="Gene3D" id="3.30.40.10">
    <property type="entry name" value="Zinc/RING finger domain, C3HC4 (zinc finger)"/>
    <property type="match status" value="1"/>
</dbReference>
<dbReference type="InterPro" id="IPR001487">
    <property type="entry name" value="Bromodomain"/>
</dbReference>
<dbReference type="InterPro" id="IPR036427">
    <property type="entry name" value="Bromodomain-like_sf"/>
</dbReference>
<dbReference type="InterPro" id="IPR018359">
    <property type="entry name" value="Bromodomain_CS"/>
</dbReference>
<dbReference type="InterPro" id="IPR031162">
    <property type="entry name" value="CBP_P300_HAT"/>
</dbReference>
<dbReference type="InterPro" id="IPR013178">
    <property type="entry name" value="Histone_AcTrfase_Rtt109/CBP"/>
</dbReference>
<dbReference type="InterPro" id="IPR003101">
    <property type="entry name" value="KIX_dom"/>
</dbReference>
<dbReference type="InterPro" id="IPR036529">
    <property type="entry name" value="KIX_dom_sf"/>
</dbReference>
<dbReference type="InterPro" id="IPR009110">
    <property type="entry name" value="Nuc_rcpt_coact"/>
</dbReference>
<dbReference type="InterPro" id="IPR014744">
    <property type="entry name" value="Nuc_rcpt_coact_CREBbp"/>
</dbReference>
<dbReference type="InterPro" id="IPR037073">
    <property type="entry name" value="Nuc_rcpt_coact_CREBbp_sf"/>
</dbReference>
<dbReference type="InterPro" id="IPR056484">
    <property type="entry name" value="PHD_P300"/>
</dbReference>
<dbReference type="InterPro" id="IPR010303">
    <property type="entry name" value="RING_CBP-p300"/>
</dbReference>
<dbReference type="InterPro" id="IPR038547">
    <property type="entry name" value="RING_CBP-p300_sf"/>
</dbReference>
<dbReference type="InterPro" id="IPR035898">
    <property type="entry name" value="TAZ_dom_sf"/>
</dbReference>
<dbReference type="InterPro" id="IPR013083">
    <property type="entry name" value="Znf_RING/FYVE/PHD"/>
</dbReference>
<dbReference type="InterPro" id="IPR000197">
    <property type="entry name" value="Znf_TAZ"/>
</dbReference>
<dbReference type="InterPro" id="IPR000433">
    <property type="entry name" value="Znf_ZZ"/>
</dbReference>
<dbReference type="InterPro" id="IPR043145">
    <property type="entry name" value="Znf_ZZ_sf"/>
</dbReference>
<dbReference type="PANTHER" id="PTHR13808">
    <property type="entry name" value="CBP/P300-RELATED"/>
    <property type="match status" value="1"/>
</dbReference>
<dbReference type="PANTHER" id="PTHR13808:SF29">
    <property type="entry name" value="HISTONE ACETYLTRANSFERASE P300"/>
    <property type="match status" value="1"/>
</dbReference>
<dbReference type="Pfam" id="PF00439">
    <property type="entry name" value="Bromodomain"/>
    <property type="match status" value="1"/>
</dbReference>
<dbReference type="Pfam" id="PF09030">
    <property type="entry name" value="Creb_binding"/>
    <property type="match status" value="1"/>
</dbReference>
<dbReference type="Pfam" id="PF08214">
    <property type="entry name" value="HAT_KAT11"/>
    <property type="match status" value="1"/>
</dbReference>
<dbReference type="Pfam" id="PF02172">
    <property type="entry name" value="KIX"/>
    <property type="match status" value="1"/>
</dbReference>
<dbReference type="Pfam" id="PF23570">
    <property type="entry name" value="PHD_P300"/>
    <property type="match status" value="1"/>
</dbReference>
<dbReference type="Pfam" id="PF06001">
    <property type="entry name" value="RING_CBP-p300"/>
    <property type="match status" value="1"/>
</dbReference>
<dbReference type="Pfam" id="PF02135">
    <property type="entry name" value="zf-TAZ"/>
    <property type="match status" value="2"/>
</dbReference>
<dbReference type="Pfam" id="PF00569">
    <property type="entry name" value="ZZ"/>
    <property type="match status" value="1"/>
</dbReference>
<dbReference type="PRINTS" id="PR00503">
    <property type="entry name" value="BROMODOMAIN"/>
</dbReference>
<dbReference type="PRINTS" id="PR01217">
    <property type="entry name" value="PRICHEXTENSN"/>
</dbReference>
<dbReference type="SMART" id="SM00297">
    <property type="entry name" value="BROMO"/>
    <property type="match status" value="1"/>
</dbReference>
<dbReference type="SMART" id="SM01250">
    <property type="entry name" value="KAT11"/>
    <property type="match status" value="1"/>
</dbReference>
<dbReference type="SMART" id="SM00551">
    <property type="entry name" value="ZnF_TAZ"/>
    <property type="match status" value="2"/>
</dbReference>
<dbReference type="SMART" id="SM00291">
    <property type="entry name" value="ZnF_ZZ"/>
    <property type="match status" value="1"/>
</dbReference>
<dbReference type="SUPFAM" id="SSF47370">
    <property type="entry name" value="Bromodomain"/>
    <property type="match status" value="1"/>
</dbReference>
<dbReference type="SUPFAM" id="SSF47040">
    <property type="entry name" value="Kix domain of CBP (creb binding protein)"/>
    <property type="match status" value="1"/>
</dbReference>
<dbReference type="SUPFAM" id="SSF69125">
    <property type="entry name" value="Nuclear receptor coactivator interlocking domain"/>
    <property type="match status" value="1"/>
</dbReference>
<dbReference type="SUPFAM" id="SSF57850">
    <property type="entry name" value="RING/U-box"/>
    <property type="match status" value="1"/>
</dbReference>
<dbReference type="SUPFAM" id="SSF57933">
    <property type="entry name" value="TAZ domain"/>
    <property type="match status" value="2"/>
</dbReference>
<dbReference type="PROSITE" id="PS00633">
    <property type="entry name" value="BROMODOMAIN_1"/>
    <property type="match status" value="1"/>
</dbReference>
<dbReference type="PROSITE" id="PS50014">
    <property type="entry name" value="BROMODOMAIN_2"/>
    <property type="match status" value="1"/>
</dbReference>
<dbReference type="PROSITE" id="PS51727">
    <property type="entry name" value="CBP_P300_HAT"/>
    <property type="match status" value="1"/>
</dbReference>
<dbReference type="PROSITE" id="PS50952">
    <property type="entry name" value="KIX"/>
    <property type="match status" value="1"/>
</dbReference>
<dbReference type="PROSITE" id="PS50134">
    <property type="entry name" value="ZF_TAZ"/>
    <property type="match status" value="2"/>
</dbReference>
<dbReference type="PROSITE" id="PS01357">
    <property type="entry name" value="ZF_ZZ_1"/>
    <property type="match status" value="1"/>
</dbReference>
<dbReference type="PROSITE" id="PS50135">
    <property type="entry name" value="ZF_ZZ_2"/>
    <property type="match status" value="1"/>
</dbReference>
<protein>
    <recommendedName>
        <fullName>Histone acetyltransferase p300</fullName>
        <shortName>p300 HAT</shortName>
        <ecNumber evidence="23">2.3.1.48</ecNumber>
    </recommendedName>
    <alternativeName>
        <fullName>E1A-associated protein p300</fullName>
    </alternativeName>
    <alternativeName>
        <fullName>Histone butyryltransferase p300</fullName>
        <ecNumber evidence="23">2.3.1.-</ecNumber>
    </alternativeName>
    <alternativeName>
        <fullName>Histone crotonyltransferase p300</fullName>
        <ecNumber evidence="2">2.3.1.-</ecNumber>
    </alternativeName>
    <alternativeName>
        <fullName evidence="2">Protein 2-hydroxyisobutyryltransferase p300</fullName>
        <ecNumber evidence="2">2.3.1.-</ecNumber>
    </alternativeName>
    <alternativeName>
        <fullName>Protein lactyltransferas p300</fullName>
        <ecNumber evidence="2">2.3.1.-</ecNumber>
    </alternativeName>
    <alternativeName>
        <fullName>Protein propionyltransferase p300</fullName>
        <ecNumber evidence="2">2.3.1.-</ecNumber>
    </alternativeName>
</protein>
<organism>
    <name type="scientific">Mus musculus</name>
    <name type="common">Mouse</name>
    <dbReference type="NCBI Taxonomy" id="10090"/>
    <lineage>
        <taxon>Eukaryota</taxon>
        <taxon>Metazoa</taxon>
        <taxon>Chordata</taxon>
        <taxon>Craniata</taxon>
        <taxon>Vertebrata</taxon>
        <taxon>Euteleostomi</taxon>
        <taxon>Mammalia</taxon>
        <taxon>Eutheria</taxon>
        <taxon>Euarchontoglires</taxon>
        <taxon>Glires</taxon>
        <taxon>Rodentia</taxon>
        <taxon>Myomorpha</taxon>
        <taxon>Muroidea</taxon>
        <taxon>Muridae</taxon>
        <taxon>Murinae</taxon>
        <taxon>Mus</taxon>
        <taxon>Mus</taxon>
    </lineage>
</organism>
<sequence length="2412" mass="263305">MAENVVEPGPPSAKRPKLSSPALSASASDGTDFGSLFDLEHDLPDELINSTELGLTNGGDISQLQTSLGIVQDAASKHKQLSELLRSGSSPNLNMGVGGPGQAMASQAQQNSPGLSLINSMVKSPMAQTGLTSPNMGIGSSGPNQGPTQSPAGMMNSPVNQPAMGMNTGMNAGMNPGMLAAGNGQGIMPNQVMNGSIGAGRGRPNMQYPNAGMGNAGSLLTEPLQQGSPQMGGQPGLRGPQPLKMGMMNNPSPYGSPYTQNSGQQIGASGLGLQIQTKTVLPNNLSPFAMDKKAVPGGGMPSMGQQPTPSVQQPGLVTPVAAGMGSGAHTADPEKRKLIQQQLVLLLHAHKCQRREQANGEVRQCNLPHCRTMKNVLNHMTHCQSGKSCQVAHCASSRQIISHWKNCTRHDCPVCLPLKNAGDKRNQQSILTGAPVGLGNPSSLGVGQQSTPSLSTVSQIDPSSIERAYAALGLPYQVNQIPPQPQVQAKNQQSQPSGQSPQGMRSVNNMSASPMGVNGGVGVQTPNLLSDSMLHSTINSQNPMMSENAGVASLGPLPTAAQPSSTGIRKQWHEDITQDLRNHLVHKLVQAIFPTPDPAALKDRRMENLVAYARKVEGDMYESANNRAEYYHLLAEKIYKIQKELEEKRRTRLQKQNMLPNAPGMGPVPMNTGSNMGQQPTGMTTNGPVPDPSMIRGSVPNHMMPRMTPQPGLNQFGQMNMPQPPIGPRQPSPLQHHGQLAQSGSLNPPMGYGPRMQQASGQNQFLSQTQFTSQGMNVTNMPLAPSSGQAPVSQAQMSSSSCPVNSPIMPPGSQGSHIHCPTLPQQAHQNSPSPVPSRTPTPHHTPPSIGNQPPPATAIPTPVPTPPAIPPGPQPPSLHPSSRQTPTPPTHLPPQVQPSLPAAPSADQSQQQPRSQQSTAVSVPTPTAPLLPPQPSTPLSQPAVSIEGQVSNPPSTSSTEVNSQTIPEKQPSQEVKMESKMEVDKPEPADAQPEDTKEAKGEDVKVEPTEMEERGPELKTDGKEEEEQPSTSATQSSPAPGQSKKKIFKPEELRQALMPTLEALYRQDPESLPFRQPVDPQLLGIPDYFDIVKSPMDLSTIKRKLDTGQYQEPWQYIDDIWLMFNNAWLYNRKTSRVYKYCSKLSEVFEQEIDPVMQSLGYCCGRKLEFSPQTLCCYGKQLCTIPRDATYYSYQNRYHFCEKCFNEIQGESVSLGDDPSQPQTTINKEQFSKRKNDTLDPELFVECTECGRKMHQICVLHHEIIWPSGFVCDGCLKKTARTRKENKLSAKRLPSTRLGTFLENRVNDFLRRQNHPESGEVTVRVVHASDKTVEVKPGMKARFVDSGEMAESFPYRTKALFAFEEIDGVDLCFFGMHVQEYGSDCPPPNQRRVYISYLDSVHFFRPKCLRTAVYHEILIGYLEYVKKLGYTTGHIWACPPSEGDDYIFHCHPPDQKIPKPKRLQEWYKKMLDKAVSERIVHDYKDILKQATEDRLTSAKELPYFEGDFWPNVLEESIKELEQEEEERKREENTSNESTDVTKGDSKNAKKKNNKKTSKNKSSLSRGNKKKPGMPNVSNDLSQKLYATMEKHKEVFFVIRLIACPAPNSLPPIVDPDPLIPCDLMDGRDAFLTLARDKHLEFSSLRRAQWSTMCMLVELHTQSQDRFVYTCNECKHHVETRWHCTVCEDYDLCITCYNTKNHDHKMEKLGLGLDDESNNQQAAATQSPGDSRRLSIQRCIQSLVHACQCRNANCSLPSCQKMKRVVQHTKGCKRKTNGGCPICKQLIALCCYHAKHCQENKCPVPFCLNIKQKLRQQQLQHRLQQAQMLRRRMASMQRTGVAGQQQGLPSPTPATPTTPTGQQPATPQTPQPQPTSQPQPTPPNNMTPYLPRTQTTGPVSQGKAPGQVTPPTPPQTAQAPLPGPPPAAVEMAMQIQRAAETQRQMAHVQIFQRPIQHQMPQMSPMAPMGMNPPPMARGPGGHLDPGIGPAGMQQQPPWAQGGMPQPQQMQSGMPRPAMMSVAQHGQPLNMAPQPGLGQVGVSPLKPGTVSQQALQNLLRTLRSPSSPLQQQQVLSILHANPQLLAAFIKQRAAKYANPNPQPLPGQPGMTQGQPGLQPPTMPGQQGVHSNPALQNMNPLQAGVQRAGLPQQQPQQQLQPPMGAMSPQAQQMNMNHNTMPSQFRDILRRQMMQQQGAGPGIGPGMANQFQQPQGIGYPPQQQQQQRMQHHMQQMQQGNMGQMGQLPQALGAEAGASLQAYQQRLLQQQMGSPAQPNPMSPQQHMLPNQAQSPHLQGQQIPNSLSNQVRSPQPVPSPRPQSQPPHSSPSPRMQPQPSPHHVSPQTSSPHPGLVAAQAANPMEQGHFASPDQNSMLSQLASNPGMANLHGASATDLGLSSDNADLNSNLSQSTLDIH</sequence>
<name>EP300_MOUSE</name>
<accession>B2RWS6</accession>
<accession>E9PYJ8</accession>
<gene>
    <name type="primary">Ep300</name>
    <name type="synonym">P300</name>
</gene>
<reference key="1">
    <citation type="journal article" date="2009" name="PLoS Biol.">
        <title>Lineage-specific biology revealed by a finished genome assembly of the mouse.</title>
        <authorList>
            <person name="Church D.M."/>
            <person name="Goodstadt L."/>
            <person name="Hillier L.W."/>
            <person name="Zody M.C."/>
            <person name="Goldstein S."/>
            <person name="She X."/>
            <person name="Bult C.J."/>
            <person name="Agarwala R."/>
            <person name="Cherry J.L."/>
            <person name="DiCuccio M."/>
            <person name="Hlavina W."/>
            <person name="Kapustin Y."/>
            <person name="Meric P."/>
            <person name="Maglott D."/>
            <person name="Birtle Z."/>
            <person name="Marques A.C."/>
            <person name="Graves T."/>
            <person name="Zhou S."/>
            <person name="Teague B."/>
            <person name="Potamousis K."/>
            <person name="Churas C."/>
            <person name="Place M."/>
            <person name="Herschleb J."/>
            <person name="Runnheim R."/>
            <person name="Forrest D."/>
            <person name="Amos-Landgraf J."/>
            <person name="Schwartz D.C."/>
            <person name="Cheng Z."/>
            <person name="Lindblad-Toh K."/>
            <person name="Eichler E.E."/>
            <person name="Ponting C.P."/>
        </authorList>
    </citation>
    <scope>NUCLEOTIDE SEQUENCE [LARGE SCALE GENOMIC DNA]</scope>
    <source>
        <strain>C57BL/6J</strain>
    </source>
</reference>
<reference key="2">
    <citation type="journal article" date="2004" name="Genome Res.">
        <title>The status, quality, and expansion of the NIH full-length cDNA project: the Mammalian Gene Collection (MGC).</title>
        <authorList>
            <consortium name="The MGC Project Team"/>
        </authorList>
    </citation>
    <scope>NUCLEOTIDE SEQUENCE [LARGE SCALE MRNA]</scope>
    <source>
        <tissue>Brain</tissue>
    </source>
</reference>
<reference key="3">
    <citation type="journal article" date="1998" name="Genes Dev.">
        <title>The basic helix-loop-helix protein BETA2 interacts with p300 to coordinate differentiation of secretin-expressing enteroendocrine cells.</title>
        <authorList>
            <person name="Mutoh H."/>
            <person name="Naya F.J."/>
            <person name="Tsai M.J."/>
            <person name="Leiter A.B."/>
        </authorList>
    </citation>
    <scope>FUNCTION</scope>
    <scope>INTERACTION WITH NEUROD1</scope>
</reference>
<reference key="4">
    <citation type="journal article" date="1999" name="J. Biol. Chem.">
        <title>MRG1 binds to the LIM domain of Lhx2 and may function as a coactivator to stimulate glycoprotein hormone alpha-subunit gene expression.</title>
        <authorList>
            <person name="Glenn D.J."/>
            <person name="Maurer R.A."/>
        </authorList>
    </citation>
    <scope>INTERACTION WITH CITED2</scope>
</reference>
<reference key="5">
    <citation type="journal article" date="2000" name="J. Biol. Chem.">
        <title>The MSG1 non-DNA-binding transactivator binds to the p300/CBP coactivators, enhancing their functional link to the Smad transcription factors.</title>
        <authorList>
            <person name="Yahata T."/>
            <person name="de Caestecker M.P."/>
            <person name="Lechleider R.J."/>
            <person name="Andriole S."/>
            <person name="Roberts A.B."/>
            <person name="Isselbacher K.J."/>
            <person name="Shioda T."/>
        </authorList>
    </citation>
    <scope>INTERACTION WITH CITED1</scope>
</reference>
<reference key="6">
    <citation type="journal article" date="2001" name="Biochem. J.">
        <title>Msx3 protein recruits histone deacetylase to down-regulate the Msx1 promoter.</title>
        <authorList>
            <person name="Mehra-Chaudhary R."/>
            <person name="Matsui H."/>
            <person name="Raghow R."/>
        </authorList>
    </citation>
    <scope>IDENTIFICATION IN A COMPLEX WITH MSX3 AND CREBBP</scope>
</reference>
<reference key="7">
    <citation type="journal article" date="2003" name="J. Biol. Chem.">
        <title>The AF-1 domain of the orphan nuclear receptor NOR-1 mediates trans-activation, coactivator recruitment, and activation by the purine anti-metabolite 6-mercaptopurine.</title>
        <authorList>
            <person name="Wansa K.D."/>
            <person name="Harris J.M."/>
            <person name="Yan G."/>
            <person name="Ordentlich P."/>
            <person name="Muscat G.E."/>
        </authorList>
    </citation>
    <scope>INTERACTION WITH NR4A3</scope>
</reference>
<reference key="8">
    <citation type="journal article" date="2004" name="J. Biol. Chem.">
        <title>Histone acetyltransferase-dependent chromatin remodeling and the vascular clock.</title>
        <authorList>
            <person name="Curtis A.M."/>
            <person name="Seo S.B."/>
            <person name="Westgate E.J."/>
            <person name="Rudic R.D."/>
            <person name="Smyth E.M."/>
            <person name="Chakravarti D."/>
            <person name="FitzGerald G.A."/>
            <person name="McNamara P."/>
        </authorList>
    </citation>
    <scope>FUNCTION</scope>
    <scope>INTERACTION WITH NPAS2</scope>
</reference>
<reference key="9">
    <citation type="journal article" date="2005" name="Mol. Cell. Biol.">
        <title>Modulation of smooth muscle gene expression by association of histone acetyltransferases and deacetylases with myocardin.</title>
        <authorList>
            <person name="Cao D."/>
            <person name="Wang Z."/>
            <person name="Zhang C.L."/>
            <person name="Oh J."/>
            <person name="Xing W."/>
            <person name="Li S."/>
            <person name="Richardson J.A."/>
            <person name="Wang D.Z."/>
            <person name="Olson E.N."/>
        </authorList>
    </citation>
    <scope>INTERACTION WITH MYOCD</scope>
</reference>
<reference key="10">
    <citation type="journal article" date="2006" name="EMBO J.">
        <title>Roles of HIPK1 and HIPK2 in AML1- and p300-dependent transcription, hematopoiesis and blood vessel formation.</title>
        <authorList>
            <person name="Aikawa Y."/>
            <person name="Nguyen L.A."/>
            <person name="Isono K."/>
            <person name="Takakura N."/>
            <person name="Tagata Y."/>
            <person name="Schmitz M.L."/>
            <person name="Koseki H."/>
            <person name="Kitabayashi I."/>
        </authorList>
    </citation>
    <scope>INTERACTION WITH HIPK2</scope>
    <scope>PHOSPHORYLATION BY HIPK2</scope>
</reference>
<reference key="11">
    <citation type="journal article" date="2008" name="Mol. Cell. Endocrinol.">
        <title>Acetylation and deacetylation regulate CCAAT/enhancer binding protein beta at K39 in mediating gene transcription.</title>
        <authorList>
            <person name="Cesena T.I."/>
            <person name="Cui T.X."/>
            <person name="Subramanian L."/>
            <person name="Fulton C.T."/>
            <person name="Iniguez-Lluhi J.A."/>
            <person name="Kwok R.P."/>
            <person name="Schwartz J."/>
        </authorList>
    </citation>
    <scope>FUNCTION</scope>
    <scope>INTERACTION WITH CREBBP</scope>
</reference>
<reference key="12">
    <citation type="journal article" date="2009" name="Mol. Endocrinol.">
        <title>The orphan nuclear receptor RORalpha restrains adipocyte differentiation through a reduction of C/EBPbeta activity and perilipin gene expression.</title>
        <authorList>
            <person name="Ohoka N."/>
            <person name="Kato S."/>
            <person name="Takahashi Y."/>
            <person name="Hayashi H."/>
            <person name="Sato R."/>
        </authorList>
    </citation>
    <scope>INTERACTION WITH CEBPB</scope>
    <scope>SUBCELLULAR LOCATION</scope>
</reference>
<reference key="13">
    <citation type="journal article" date="2010" name="Cell">
        <title>A tissue-specific atlas of mouse protein phosphorylation and expression.</title>
        <authorList>
            <person name="Huttlin E.L."/>
            <person name="Jedrychowski M.P."/>
            <person name="Elias J.E."/>
            <person name="Goswami T."/>
            <person name="Rad R."/>
            <person name="Beausoleil S.A."/>
            <person name="Villen J."/>
            <person name="Haas W."/>
            <person name="Sowa M.E."/>
            <person name="Gygi S.P."/>
        </authorList>
    </citation>
    <scope>PHOSPHORYLATION [LARGE SCALE ANALYSIS] AT SER-500</scope>
    <scope>IDENTIFICATION BY MASS SPECTROMETRY [LARGE SCALE ANALYSIS]</scope>
    <source>
        <tissue>Brain</tissue>
        <tissue>Lung</tissue>
        <tissue>Pancreas</tissue>
        <tissue>Spleen</tissue>
        <tissue>Testis</tissue>
    </source>
</reference>
<reference key="14">
    <citation type="journal article" date="2010" name="J. Cell Sci.">
        <title>Acetylation of Rb by PCAF is required for nuclear localization and keratinocyte differentiation.</title>
        <authorList>
            <person name="Pickard A."/>
            <person name="Wong P.P."/>
            <person name="McCance D.J."/>
        </authorList>
    </citation>
    <scope>INTERACTION WITH RB1</scope>
</reference>
<reference key="15">
    <citation type="journal article" date="2010" name="J. Immunol.">
        <title>p300-mediated acetylation stabilizes the Th-inducing POK factor.</title>
        <authorList>
            <person name="Zhang M."/>
            <person name="Zhang J."/>
            <person name="Rui J."/>
            <person name="Liu X."/>
        </authorList>
    </citation>
    <scope>FUNCTION IN ACETYLATION OF ZBTB7B</scope>
</reference>
<reference key="16">
    <citation type="journal article" date="2011" name="Biochem. J.">
        <title>Regulation of unfolded protein response modulator XBP1s by acetylation and deacetylation.</title>
        <authorList>
            <person name="Wang F.M."/>
            <person name="Chen Y.J."/>
            <person name="Ouyang H.J."/>
        </authorList>
    </citation>
    <scope>FUNCTION IN ACETYLATION OF XBP1</scope>
</reference>
<reference key="17">
    <citation type="journal article" date="2013" name="Mol. Cell">
        <title>SIRT5-mediated lysine desuccinylation impacts diverse metabolic pathways.</title>
        <authorList>
            <person name="Park J."/>
            <person name="Chen Y."/>
            <person name="Tishkoff D.X."/>
            <person name="Peng C."/>
            <person name="Tan M."/>
            <person name="Dai L."/>
            <person name="Xie Z."/>
            <person name="Zhang Y."/>
            <person name="Zwaans B.M."/>
            <person name="Skinner M.E."/>
            <person name="Lombard D.B."/>
            <person name="Zhao Y."/>
        </authorList>
    </citation>
    <scope>ACETYLATION [LARGE SCALE ANALYSIS] AT LYS-1179; LYS-1557 AND LYS-1559</scope>
    <scope>IDENTIFICATION BY MASS SPECTROMETRY [LARGE SCALE ANALYSIS]</scope>
    <source>
        <tissue>Embryonic fibroblast</tissue>
    </source>
</reference>
<reference key="18">
    <citation type="journal article" date="2014" name="Cell Metab.">
        <title>A SIRT7-dependent acetylation switch of GABPbeta1 controls mitochondrial function.</title>
        <authorList>
            <person name="Ryu D."/>
            <person name="Jo Y.S."/>
            <person name="Lo Sasso G."/>
            <person name="Stein S."/>
            <person name="Zhang H."/>
            <person name="Perino A."/>
            <person name="Lee J.U."/>
            <person name="Zeviani M."/>
            <person name="Romand R."/>
            <person name="Hottiger M.O."/>
            <person name="Schoonjans K."/>
            <person name="Auwerx J."/>
        </authorList>
    </citation>
    <scope>FUNCTION</scope>
</reference>
<reference key="19">
    <citation type="journal article" date="2014" name="Mol. Cell. Biol.">
        <title>p300-dependent acetylation of activating transcription factor 5 enhances C/EBPbeta transactivation of C/EBPalpha during 3T3-L1 differentiation.</title>
        <authorList>
            <person name="Zhao Y."/>
            <person name="Zhang Y.D."/>
            <person name="Zhang Y.Y."/>
            <person name="Qian S.W."/>
            <person name="Zhang Z.C."/>
            <person name="Li S.F."/>
            <person name="Guo L."/>
            <person name="Liu Y."/>
            <person name="Wen B."/>
            <person name="Lei Q.Y."/>
            <person name="Tang Q.Q."/>
            <person name="Li X."/>
        </authorList>
    </citation>
    <scope>FUNCTION</scope>
    <scope>INTERACTION WITH ATF5 AND CREBBP</scope>
</reference>
<reference key="20">
    <citation type="journal article" date="2016" name="Mol. Cell">
        <title>Dynamic competing histone H4 K5K8 acetylation and butyrylation are hallmarks of highly active gene promoters.</title>
        <authorList>
            <person name="Goudarzi A."/>
            <person name="Zhang D."/>
            <person name="Huang H."/>
            <person name="Barral S."/>
            <person name="Kwon O.K."/>
            <person name="Qi S."/>
            <person name="Tang Z."/>
            <person name="Buchou T."/>
            <person name="Vitte A.L."/>
            <person name="He T."/>
            <person name="Cheng Z."/>
            <person name="Montellier E."/>
            <person name="Gaucher J."/>
            <person name="Curtet S."/>
            <person name="Debernardi A."/>
            <person name="Charbonnier G."/>
            <person name="Puthier D."/>
            <person name="Petosa C."/>
            <person name="Panne D."/>
            <person name="Rousseaux S."/>
            <person name="Roeder R.G."/>
            <person name="Zhao Y."/>
            <person name="Khochbin S."/>
        </authorList>
    </citation>
    <scope>FUNCTION</scope>
    <scope>CATALYTIC ACTIVITY</scope>
</reference>
<reference key="21">
    <citation type="journal article" date="2017" name="Biochem. Biophys. Res. Commun.">
        <title>Identification of zinc finger transcription factor EGR2 as a novel acetylated protein.</title>
        <authorList>
            <person name="Noritsugu K."/>
            <person name="Ito A."/>
            <person name="Nakao Y."/>
            <person name="Yoshida M."/>
        </authorList>
    </citation>
    <scope>FUNCTION</scope>
    <scope>CATALYTIC ACTIVITY</scope>
</reference>
<reference key="22">
    <citation type="journal article" date="2017" name="J. Cell Sci.">
        <title>Lipopolysaccharide modulates p300 and Sirt1 to promote PRMT1 stability via an SCFFbxl17-recognized acetyldegron.</title>
        <authorList>
            <person name="Lai Y."/>
            <person name="Li J."/>
            <person name="Li X."/>
            <person name="Zou C."/>
        </authorList>
    </citation>
    <scope>FUNCTION</scope>
    <scope>CATALYTIC ACTIVITY</scope>
</reference>
<proteinExistence type="evidence at protein level"/>
<comment type="function">
    <text evidence="2 14 17 19 21 22 23 24 25 26 28">Functions as a histone acetyltransferase and regulates transcription via chromatin remodeling (By similarity). Acetylates all four core histones in nucleosomes (By similarity). Histone acetylation gives an epigenetic tag for transcriptional activation (By similarity). Mediates acetylation of histone H3 at 'Lys-122' (H3K122ac), a modification that localizes at the surface of the histone octamer and stimulates transcription, possibly by promoting nucleosome instability (By similarity). Mediates acetylation of histone H3 at 'Lys-18' and 'Lys-27' (H3K18ac and H3K27ac, respectively) (By similarity). Also able to acetylate histone lysine residues that are already monomethylated on the same side chain to form N6-acetyl-N6-methyllysine (Kacme), an epigenetic mark of active chromatin associated with increased transcriptional initiation (By similarity). Catalyzes formation of histone H4 acetyl-methylated at 'Lys-5' and 'Lys-12' (H4K5acme and H4K12acme, respectively) (By similarity). Also functions as acetyltransferase for non-histone targets, such as ALX1, HDAC1, PRMT1, SIRT2, STAT3 or GLUL (PubMed:28576496, PubMed:28883095). Acetylates 'Lys-131' of ALX1 and acts as its coactivator (By similarity). Acetylates SIRT2 and is proposed to indirectly increase the transcriptional activity of TP53 through acetylation and subsequent attenuation of SIRT2 deacetylase function (By similarity). Following DNA damage, forms a stress-responsive p53/TP53 coactivator complex with JMY which mediates p53/TP53 acetylation, thereby increasing p53/TP53-dependent transcription and apoptosis (By similarity). Promotes chromatin acetylation in heat shock responsive HSP genes during the heat shock response (HSR), thereby stimulating HSR transcription (By similarity). Acetylates HDAC1 leading to its inactivation and modulation of transcription (By similarity). Acetylates 'Lys-247' of EGR2 (PubMed:28576496). Acts as a TFAP2A-mediated transcriptional coactivator in presence of CITED2 (By similarity). Plays a role as a coactivator of NEUROD1-dependent transcription of the secretin and p21 genes and controls terminal differentiation of cells in the intestinal epithelium (By similarity). Promotes cardiac myocyte enlargement (By similarity). Can also mediate transcriptional repression (By similarity). Acetylates FOXO1 and enhances its transcriptional activity (By similarity). Acetylates STAT3 at different sites, promoting both STAT3 dimerization and activation and recruitment to chromatin (By similarity). Acetylates BCL6 which disrupts its ability to recruit histone deacetylases and hinders its transcriptional repressor activity (By similarity). Participates in CLOCK or NPAS2-regulated rhythmic gene transcription; exhibits a circadian association with CLOCK or NPAS2, correlating with increase in PER1/2 mRNA and histone H3 acetylation on the PER1/2 promoter (By similarity). Acetylates MTA1 at 'Lys-626' which is essential for its transcriptional coactivator activity (PubMed:14645221, PubMed:9512516). Acetylates XBP1 isoform 2; acetylation increases protein stability of XBP1 isoform 2 and enhances its transcriptional activity (PubMed:20955178). Acetylates PCNA; acetylation promotes removal of chromatin-bound PCNA and its degradation during nucleotide excision repair (NER) (By similarity). Acetylates MEF2D (By similarity). Acetylates and stabilizes ZBTB7B protein by antagonizing ubiquitin conjugation and degradation, this mechanism may be involved in CD4/CD8 lineage differentiation (PubMed:20810990). Acetylates GABPB1, impairing GABPB1 heterotetramerization and activity (PubMed:25200183). Acetylates PCK1 and promotes PCK1 anaplerotic activity (By similarity). Acetylates RXRA and RXRG (By similarity). Acetylates isoform M2 of PKM (PKM2), promoting its homodimerization and conversion into a protein kinase (By similarity). Acetylates RPTOR in response to leucine, leading to activation of the mTORC1 complex (By similarity). Acetylates RICTOR, leading to activation of the mTORC2 complex (By similarity). Mediates cAMP-gene regulation by binding specifically to phosphorylated CREBBP (PubMed:18486321, PubMed:24216764). In addition to protein acetyltransferase, can use different acyl-CoA substrates, such as (2E)-butenoyl-CoA (crotonyl-CoA), butanoyl-CoA (butyryl-CoA), 2-hydroxyisobutanoyl-CoA (2-hydroxyisobutyryl-CoA), lactoyl-CoA or propanoyl-CoA (propionyl-CoA), and is able to mediate protein crotonylation, butyrylation, 2-hydroxyisobutyrylation, lactylation or propionylation, respectively (PubMed:27105113). Acts as a histone crotonyltransferase; crotonylation marks active promoters and enhancers and confers resistance to transcriptional repressors. Histone crotonyltransferase activity is dependent on the concentration of (2E)-butenoyl-CoA (crotonyl-CoA) substrate and such activity is weak when (2E)-butenoyl-CoA (crotonyl-CoA) concentration is low (By similarity). Also acts as a histone butyryltransferase; butyrylation marks active promoters (PubMed:27105113). Catalyzes histone lactylation in macrophages by using lactoyl-CoA directly derived from endogenous or exogenous lactate, leading to stimulates gene transcription (By similarity). Acts as a protein-lysine 2-hydroxyisobutyryltransferase; regulates glycolysis by mediating 2-hydroxyisobutyrylation of glycolytic enzymes. Functions as a transcriptional coactivator for SMAD4 in the TGF-beta signaling pathway (By similarity).</text>
</comment>
<comment type="catalytic activity">
    <reaction evidence="23">
        <text>L-lysyl-[histone] + acetyl-CoA = N(6)-acetyl-L-lysyl-[histone] + CoA + H(+)</text>
        <dbReference type="Rhea" id="RHEA:21992"/>
        <dbReference type="Rhea" id="RHEA-COMP:9845"/>
        <dbReference type="Rhea" id="RHEA-COMP:11338"/>
        <dbReference type="ChEBI" id="CHEBI:15378"/>
        <dbReference type="ChEBI" id="CHEBI:29969"/>
        <dbReference type="ChEBI" id="CHEBI:57287"/>
        <dbReference type="ChEBI" id="CHEBI:57288"/>
        <dbReference type="ChEBI" id="CHEBI:61930"/>
        <dbReference type="EC" id="2.3.1.48"/>
    </reaction>
    <physiologicalReaction direction="left-to-right" evidence="23">
        <dbReference type="Rhea" id="RHEA:21993"/>
    </physiologicalReaction>
</comment>
<comment type="catalytic activity">
    <reaction evidence="24 29">
        <text>L-lysyl-[protein] + acetyl-CoA = N(6)-acetyl-L-lysyl-[protein] + CoA + H(+)</text>
        <dbReference type="Rhea" id="RHEA:45948"/>
        <dbReference type="Rhea" id="RHEA-COMP:9752"/>
        <dbReference type="Rhea" id="RHEA-COMP:10731"/>
        <dbReference type="ChEBI" id="CHEBI:15378"/>
        <dbReference type="ChEBI" id="CHEBI:29969"/>
        <dbReference type="ChEBI" id="CHEBI:57287"/>
        <dbReference type="ChEBI" id="CHEBI:57288"/>
        <dbReference type="ChEBI" id="CHEBI:61930"/>
    </reaction>
    <physiologicalReaction direction="left-to-right" evidence="24 29">
        <dbReference type="Rhea" id="RHEA:45949"/>
    </physiologicalReaction>
</comment>
<comment type="catalytic activity">
    <reaction evidence="2">
        <text>N(6)-methyl-L-lysyl-[histone] + acetyl-CoA = N(6)-acetyl-N(6)-methyl-L-lysyl-[histone] + CoA + H(+)</text>
        <dbReference type="Rhea" id="RHEA:77775"/>
        <dbReference type="Rhea" id="RHEA-COMP:9846"/>
        <dbReference type="Rhea" id="RHEA-COMP:18984"/>
        <dbReference type="ChEBI" id="CHEBI:15378"/>
        <dbReference type="ChEBI" id="CHEBI:57287"/>
        <dbReference type="ChEBI" id="CHEBI:57288"/>
        <dbReference type="ChEBI" id="CHEBI:61929"/>
        <dbReference type="ChEBI" id="CHEBI:197459"/>
    </reaction>
    <physiologicalReaction direction="left-to-right" evidence="2">
        <dbReference type="Rhea" id="RHEA:77776"/>
    </physiologicalReaction>
</comment>
<comment type="catalytic activity">
    <reaction evidence="23">
        <text>butanoyl-CoA + L-lysyl-[protein] = N(6)-butanoyl-L-lysyl-[protein] + CoA + H(+)</text>
        <dbReference type="Rhea" id="RHEA:53912"/>
        <dbReference type="Rhea" id="RHEA-COMP:9752"/>
        <dbReference type="Rhea" id="RHEA-COMP:13708"/>
        <dbReference type="ChEBI" id="CHEBI:15378"/>
        <dbReference type="ChEBI" id="CHEBI:29969"/>
        <dbReference type="ChEBI" id="CHEBI:57287"/>
        <dbReference type="ChEBI" id="CHEBI:57371"/>
        <dbReference type="ChEBI" id="CHEBI:137955"/>
    </reaction>
</comment>
<comment type="catalytic activity">
    <reaction evidence="2">
        <text>(2E)-butenoyl-CoA + L-lysyl-[protein] = N(6)-(2E)-butenoyl-L-lysyl-[protein] + CoA + H(+)</text>
        <dbReference type="Rhea" id="RHEA:53908"/>
        <dbReference type="Rhea" id="RHEA-COMP:9752"/>
        <dbReference type="Rhea" id="RHEA-COMP:13707"/>
        <dbReference type="ChEBI" id="CHEBI:15378"/>
        <dbReference type="ChEBI" id="CHEBI:29969"/>
        <dbReference type="ChEBI" id="CHEBI:57287"/>
        <dbReference type="ChEBI" id="CHEBI:57332"/>
        <dbReference type="ChEBI" id="CHEBI:137954"/>
    </reaction>
</comment>
<comment type="catalytic activity">
    <reaction evidence="2">
        <text>propanoyl-CoA + L-lysyl-[protein] = N(6)-propanoyl-L-lysyl-[protein] + CoA + H(+)</text>
        <dbReference type="Rhea" id="RHEA:54020"/>
        <dbReference type="Rhea" id="RHEA-COMP:9752"/>
        <dbReference type="Rhea" id="RHEA-COMP:13758"/>
        <dbReference type="ChEBI" id="CHEBI:15378"/>
        <dbReference type="ChEBI" id="CHEBI:29969"/>
        <dbReference type="ChEBI" id="CHEBI:57287"/>
        <dbReference type="ChEBI" id="CHEBI:57392"/>
        <dbReference type="ChEBI" id="CHEBI:138019"/>
    </reaction>
</comment>
<comment type="catalytic activity">
    <reaction evidence="2">
        <text>2-hydroxyisobutanoyl-CoA + L-lysyl-[protein] = N(6)-(2-hydroxyisobutanoyl)-L-lysyl-[protein] + CoA + H(+)</text>
        <dbReference type="Rhea" id="RHEA:24180"/>
        <dbReference type="Rhea" id="RHEA-COMP:9752"/>
        <dbReference type="Rhea" id="RHEA-COMP:15921"/>
        <dbReference type="ChEBI" id="CHEBI:15378"/>
        <dbReference type="ChEBI" id="CHEBI:29969"/>
        <dbReference type="ChEBI" id="CHEBI:57287"/>
        <dbReference type="ChEBI" id="CHEBI:131780"/>
        <dbReference type="ChEBI" id="CHEBI:144968"/>
    </reaction>
    <physiologicalReaction direction="left-to-right" evidence="2">
        <dbReference type="Rhea" id="RHEA:24181"/>
    </physiologicalReaction>
</comment>
<comment type="catalytic activity">
    <reaction evidence="2">
        <text>(S)-lactoyl-CoA + L-lysyl-[protein] = N(6)-[(S)-lactoyl]-L-lysyl-[protein] + CoA + H(+)</text>
        <dbReference type="Rhea" id="RHEA:61996"/>
        <dbReference type="Rhea" id="RHEA-COMP:9752"/>
        <dbReference type="Rhea" id="RHEA-COMP:19466"/>
        <dbReference type="ChEBI" id="CHEBI:15378"/>
        <dbReference type="ChEBI" id="CHEBI:29969"/>
        <dbReference type="ChEBI" id="CHEBI:57287"/>
        <dbReference type="ChEBI" id="CHEBI:231527"/>
        <dbReference type="ChEBI" id="CHEBI:231528"/>
    </reaction>
    <physiologicalReaction direction="left-to-right" evidence="2">
        <dbReference type="Rhea" id="RHEA:61997"/>
    </physiologicalReaction>
</comment>
<comment type="subunit">
    <text evidence="2 10 11 12 13 14 15 16 17 18 20 21 26">Part of a complex composed of MSX3, CREBBP/CBP AND EP300/p300; the interaction with MSX3 decreases histone acetylation activity (PubMed:11115394). Interacts with HIF1A; the interaction is stimulated in response to hypoxia and inhibited by CITED2. Probably part of a complex with HIF1A and CREBBP. Interacts (via N-terminus) with TFAP2A (via N-terminus); the interaction requires CITED2 (By similarity). Interacts (via CH1 domain) with CITED2 (via C-terminus) (PubMed:10593900). Interacts with CITED1 (unphosphorylated form preferentially and via C-terminus) (PubMed:10722728). Interacts with ESR1; the interaction is estrogen-dependent and enhanced by CITED1 (By similarity). Interacts with HIPK2 (PubMed:16917507). Interacts with DTX1, EID1, ELF3, FEN1, LEF1, NCOA1, NCOA6, NR3C1, PCAF, PELP1, PRDM6, SP1, SP3, SPIB, SRY, TCF7L2, DDX5, DDX17, SATB1, SRCAP and TRERF1 (By similarity). Interacts with JMY, the complex activates p53/TP53 transcriptional activity. Interacts with TTC5/STRAP; the interaction facilitates the association between JMY and p300/EP300 cofactors. Interacts with p53/TP53; the interaction is facilitated by TTC5/STRAP. Forms a complex with TTC5/STRAP and HSF1; these interactions augment chromatin-bound HSF1 and p300/EP300 histone acetyltransferase activity (By similarity). Part of a complex containing CARM1 and NCOA2/GRIP1. Interacts with ING4 and this interaction may be indirect. Interacts with ING5. Interacts with the C-terminal region of CITED4. Non-sumoylated EP300 preferentially interacts with SENP3. Interacts with SS18L1/CREST. Interacts with ALX1 (via homeobox domain) (By similarity). Interacts with NEUROD1; the interaction is inhibited by NR0B2 (PubMed:9512516). Interacts with TCF3 (By similarity). Interacts (via CREB-binding domain) with MYOCD (via C-terminus) (PubMed:15601857). Interacts with ROCK2 and PPARG. Forms a complex made of CDK9, CCNT1/cyclin-T1, EP300 and GATA4 that stimulates hypertrophy in cardiomyocytes. Interacts with IRF1 and this interaction enhances acetylation of p53/TP53 and stimulation of its activity. Interacts with ALKBH4 and DDIT3/CHOP. Interacts with KLF15 (By similarity). Interacts with CEBPB and RORA (PubMed:18486321, PubMed:24216764). Interacts with NPAS2, BMAL1 and CLOCK. Interacts with SIRT2 isoform 1, isoform 2 and isoform 5. Interacts with MTA1. Interacts with HDAC4 and HDAC5 in the presence of TFAP2C. Interacts with TRIP4 (By similarity). Interacts with NPAS2 (PubMed:14645221). Directly interacts with ZBTB49; this interaction leads to synergistic transactivation of CDKN1A (By similarity). Interacts with NR4A3 (PubMed:12709428). Interacts with ZNF451 (By similarity). Interacts with ATF5; EP300 is required for ATF5 and CEBPB interaction and DNA binding (PubMed:24216764). Interacts with HSF1. Interacts with ZBTB48/TZAP. Interacts with STAT1; the interaction is enhanced upon IFN-gamma stimulation. Interacts with HNRNPU (via C-terminus); this interaction enhances DNA-binding of HNRNPU to nuclear scaffold/matrix attachment region (S/MAR) elements. Interacts with BCL11B. Interacts with SMAD4; negatively regulated by ZBTB7A. Interacts with DUX4 (via C-terminus). Interacts with NUPR1; this interaction enhances the effect of EP300 on PAX2 transcription factor activity. Interacts with RXRA; the interaction is decreased by 9-cis retinoic acid. NR4A1 competes with EP300 for interaction with RXRA and thereby attenuates EP300 mediated acetylation of RXRA (By similarity). Interacts with RB1 (PubMed:20940255). Interacts with DDX3X; this interaction may facilitate HNF4A acetylation. Interacts with SOX9. Interacts with ATF4; EP300/p300 stabilizes ATF4 and increases its transcriptional activity independently of its catalytic activity by preventing its ubiquitination (By similarity). Interacts with KAT5; promoting KAT5 autoacetylation (By similarity). Interacts (via bromo domain) with (acetylated) STAT3; interaction takes place following STAT3 acetylation by EP300 and promotes enhanceosome assembly (By similarity).</text>
</comment>
<comment type="interaction">
    <interactant intactId="EBI-3953360">
        <id>B2RWS6</id>
    </interactant>
    <interactant intactId="EBI-27122375">
        <id>A0A087WPF7</id>
        <label>Auts2</label>
    </interactant>
    <organismsDiffer>false</organismsDiffer>
    <experiments>3</experiments>
</comment>
<comment type="interaction">
    <interactant intactId="EBI-3953360">
        <id>B2RWS6</id>
    </interactant>
    <interactant intactId="EBI-474016">
        <id>P02340</id>
        <label>Tp53</label>
    </interactant>
    <organismsDiffer>false</organismsDiffer>
    <experiments>3</experiments>
</comment>
<comment type="subcellular location">
    <subcellularLocation>
        <location evidence="2">Cytoplasm</location>
    </subcellularLocation>
    <subcellularLocation>
        <location evidence="7 18">Nucleus</location>
    </subcellularLocation>
    <text evidence="2">In the presence of ALX1 relocalizes from the cytoplasm to the nucleus. Colocalizes with ROCK2 in the nucleus. Localizes to sites of DNA damage.</text>
</comment>
<comment type="domain">
    <text evidence="2">The CRD1 domain (cell cycle regulatory domain 1) mediates transcriptional repression of a subset of p300 responsive genes; it can be de-repressed by CDKN1A/p21WAF1 at least at some promoters. It contains sumoylation and acetylation sites and the same lysine residues may be targeted for the respective modifications. It is proposed that deacetylation by SIRT1 allows sumoylation leading to suppressed activity (By similarity).</text>
</comment>
<comment type="PTM">
    <text evidence="2">Acetylated on Lys at up to 17 positions by intermolecular autocatalysis. Deacetylated in the transcriptional repression domain (CRD1) by SIRT1, preferentially at Lys-1019. Deacetylated by SIRT2, preferentially at Lys-419, Lys-424, Lys-1541, Lys-1545, Lys-1548, Lys-1698, Lys-1703 and Lys-1706.</text>
</comment>
<comment type="PTM">
    <text evidence="2">Citrullinated at Arg-2143 by PADI4, which impairs methylation by CARM1 and promotes interaction with NCOA2/GRIP1.</text>
</comment>
<comment type="PTM">
    <text evidence="2">Methylated at Arg-581 and Arg-605 in the KIX domain by CARM1, which blocks association with CREB, inhibits CREB signaling and activates apoptotic response. Also methylated at Arg-2143 by CARM1, which impairs interaction with NCOA2/GRIP1 (By similarity).</text>
</comment>
<comment type="PTM">
    <text evidence="2">Sumoylated; sumoylation in the transcriptional repression domain (CRD1) mediates transcriptional repression. Desumoylated by SENP3 through the removal of SUMO2 and SUMO3 (By similarity).</text>
</comment>
<comment type="PTM">
    <text evidence="2">Probable target of ubiquitination by FBXO3, leading to rapid proteasome-dependent degradation.</text>
</comment>
<comment type="PTM">
    <text evidence="2">Phosphorylation at Ser-89 by AMPK reduces interaction with nuclear receptors, such as PPARG (By similarity). Phosphorylated by HIPK2 in a RUNX1-dependent manner. This phosphorylation that activates EP300 happens when RUNX1 is associated with DNA and CBFB. Phosphorylated by ROCK2 and this enhances its activity (By similarity).</text>
</comment>
<keyword id="KW-0007">Acetylation</keyword>
<keyword id="KW-0012">Acyltransferase</keyword>
<keyword id="KW-0090">Biological rhythms</keyword>
<keyword id="KW-0103">Bromodomain</keyword>
<keyword id="KW-0131">Cell cycle</keyword>
<keyword id="KW-0164">Citrullination</keyword>
<keyword id="KW-0175">Coiled coil</keyword>
<keyword id="KW-0963">Cytoplasm</keyword>
<keyword id="KW-0221">Differentiation</keyword>
<keyword id="KW-1017">Isopeptide bond</keyword>
<keyword id="KW-0479">Metal-binding</keyword>
<keyword id="KW-0488">Methylation</keyword>
<keyword id="KW-0539">Nucleus</keyword>
<keyword id="KW-0597">Phosphoprotein</keyword>
<keyword id="KW-1185">Reference proteome</keyword>
<keyword id="KW-0677">Repeat</keyword>
<keyword id="KW-0804">Transcription</keyword>
<keyword id="KW-0805">Transcription regulation</keyword>
<keyword id="KW-0808">Transferase</keyword>
<keyword id="KW-0832">Ubl conjugation</keyword>
<keyword id="KW-0862">Zinc</keyword>
<keyword id="KW-0863">Zinc-finger</keyword>
<feature type="initiator methionine" description="Removed" evidence="2">
    <location>
        <position position="1"/>
    </location>
</feature>
<feature type="chain" id="PRO_0000409386" description="Histone acetyltransferase p300">
    <location>
        <begin position="2"/>
        <end position="2412"/>
    </location>
</feature>
<feature type="domain" description="KIX" evidence="7">
    <location>
        <begin position="567"/>
        <end position="646"/>
    </location>
</feature>
<feature type="domain" description="Bromo" evidence="4">
    <location>
        <begin position="1048"/>
        <end position="1155"/>
    </location>
</feature>
<feature type="domain" description="CBP/p300-type HAT" evidence="8">
    <location>
        <begin position="1286"/>
        <end position="1662"/>
    </location>
</feature>
<feature type="zinc finger region" description="TAZ-type 1" evidence="5">
    <location>
        <begin position="332"/>
        <end position="418"/>
    </location>
</feature>
<feature type="zinc finger region" description="ZZ-type" evidence="6">
    <location>
        <begin position="1664"/>
        <end position="1712"/>
    </location>
</feature>
<feature type="zinc finger region" description="TAZ-type 2" evidence="5">
    <location>
        <begin position="1727"/>
        <end position="1808"/>
    </location>
</feature>
<feature type="region of interest" description="Disordered" evidence="9">
    <location>
        <begin position="1"/>
        <end position="27"/>
    </location>
</feature>
<feature type="region of interest" description="Interaction with RORA">
    <location>
        <begin position="2"/>
        <end position="149"/>
    </location>
</feature>
<feature type="region of interest" description="Interaction with ALX1" evidence="2">
    <location>
        <begin position="2"/>
        <end position="139"/>
    </location>
</feature>
<feature type="region of interest" description="Disordered" evidence="9">
    <location>
        <begin position="130"/>
        <end position="156"/>
    </location>
</feature>
<feature type="region of interest" description="Disordered" evidence="9">
    <location>
        <begin position="484"/>
        <end position="517"/>
    </location>
</feature>
<feature type="region of interest" description="Disordered" evidence="9">
    <location>
        <begin position="719"/>
        <end position="762"/>
    </location>
</feature>
<feature type="region of interest" description="Disordered" evidence="9">
    <location>
        <begin position="776"/>
        <end position="1049"/>
    </location>
</feature>
<feature type="region of interest" description="CRD1; mediates transcriptional repression" evidence="1">
    <location>
        <begin position="1016"/>
        <end position="1028"/>
    </location>
</feature>
<feature type="region of interest" description="Interaction with histone" evidence="2">
    <location>
        <begin position="1396"/>
        <end position="1398"/>
    </location>
</feature>
<feature type="region of interest" description="Disordered" evidence="9">
    <location>
        <begin position="1519"/>
        <end position="1577"/>
    </location>
</feature>
<feature type="region of interest" description="Disordered" evidence="9">
    <location>
        <begin position="1830"/>
        <end position="1925"/>
    </location>
</feature>
<feature type="region of interest" description="Disordered" evidence="9">
    <location>
        <begin position="1991"/>
        <end position="2011"/>
    </location>
</feature>
<feature type="region of interest" description="Interaction with NCOA2" evidence="1">
    <location>
        <begin position="2042"/>
        <end position="2237"/>
    </location>
</feature>
<feature type="region of interest" description="Disordered" evidence="9">
    <location>
        <begin position="2094"/>
        <end position="2133"/>
    </location>
</feature>
<feature type="region of interest" description="Disordered" evidence="9">
    <location>
        <begin position="2192"/>
        <end position="2236"/>
    </location>
</feature>
<feature type="region of interest" description="Disordered" evidence="9">
    <location>
        <begin position="2263"/>
        <end position="2348"/>
    </location>
</feature>
<feature type="coiled-coil region" evidence="3">
    <location>
        <begin position="1510"/>
        <end position="1539"/>
    </location>
</feature>
<feature type="short sequence motif" description="Nuclear localization signal" evidence="3">
    <location>
        <begin position="11"/>
        <end position="17"/>
    </location>
</feature>
<feature type="compositionally biased region" description="Low complexity" evidence="9">
    <location>
        <begin position="18"/>
        <end position="27"/>
    </location>
</feature>
<feature type="compositionally biased region" description="Polar residues" evidence="9">
    <location>
        <begin position="141"/>
        <end position="151"/>
    </location>
</feature>
<feature type="compositionally biased region" description="Low complexity" evidence="9">
    <location>
        <begin position="484"/>
        <end position="503"/>
    </location>
</feature>
<feature type="compositionally biased region" description="Pro residues" evidence="9">
    <location>
        <begin position="722"/>
        <end position="731"/>
    </location>
</feature>
<feature type="compositionally biased region" description="Polar residues" evidence="9">
    <location>
        <begin position="776"/>
        <end position="804"/>
    </location>
</feature>
<feature type="compositionally biased region" description="Pro residues" evidence="9">
    <location>
        <begin position="833"/>
        <end position="845"/>
    </location>
</feature>
<feature type="compositionally biased region" description="Pro residues" evidence="9">
    <location>
        <begin position="852"/>
        <end position="878"/>
    </location>
</feature>
<feature type="compositionally biased region" description="Pro residues" evidence="9">
    <location>
        <begin position="886"/>
        <end position="896"/>
    </location>
</feature>
<feature type="compositionally biased region" description="Low complexity" evidence="9">
    <location>
        <begin position="897"/>
        <end position="920"/>
    </location>
</feature>
<feature type="compositionally biased region" description="Pro residues" evidence="9">
    <location>
        <begin position="926"/>
        <end position="936"/>
    </location>
</feature>
<feature type="compositionally biased region" description="Polar residues" evidence="9">
    <location>
        <begin position="948"/>
        <end position="973"/>
    </location>
</feature>
<feature type="compositionally biased region" description="Basic and acidic residues" evidence="9">
    <location>
        <begin position="975"/>
        <end position="1022"/>
    </location>
</feature>
<feature type="compositionally biased region" description="Low complexity" evidence="9">
    <location>
        <begin position="1029"/>
        <end position="1039"/>
    </location>
</feature>
<feature type="compositionally biased region" description="Basic and acidic residues" evidence="9">
    <location>
        <begin position="1519"/>
        <end position="1531"/>
    </location>
</feature>
<feature type="compositionally biased region" description="Basic residues" evidence="9">
    <location>
        <begin position="1547"/>
        <end position="1557"/>
    </location>
</feature>
<feature type="compositionally biased region" description="Low complexity" evidence="9">
    <location>
        <begin position="1855"/>
        <end position="1864"/>
    </location>
</feature>
<feature type="compositionally biased region" description="Pro residues" evidence="9">
    <location>
        <begin position="1865"/>
        <end position="1883"/>
    </location>
</feature>
<feature type="compositionally biased region" description="Polar residues" evidence="9">
    <location>
        <begin position="1884"/>
        <end position="1897"/>
    </location>
</feature>
<feature type="compositionally biased region" description="Low complexity" evidence="9">
    <location>
        <begin position="2104"/>
        <end position="2113"/>
    </location>
</feature>
<feature type="compositionally biased region" description="Low complexity" evidence="9">
    <location>
        <begin position="2201"/>
        <end position="2236"/>
    </location>
</feature>
<feature type="compositionally biased region" description="Polar residues" evidence="9">
    <location>
        <begin position="2276"/>
        <end position="2302"/>
    </location>
</feature>
<feature type="compositionally biased region" description="Pro residues" evidence="9">
    <location>
        <begin position="2308"/>
        <end position="2333"/>
    </location>
</feature>
<feature type="compositionally biased region" description="Low complexity" evidence="9">
    <location>
        <begin position="2334"/>
        <end position="2346"/>
    </location>
</feature>
<feature type="binding site" evidence="2">
    <location>
        <position position="348"/>
    </location>
    <ligand>
        <name>Zn(2+)</name>
        <dbReference type="ChEBI" id="CHEBI:29105"/>
        <label>1</label>
    </ligand>
</feature>
<feature type="binding site" evidence="2">
    <location>
        <position position="352"/>
    </location>
    <ligand>
        <name>Zn(2+)</name>
        <dbReference type="ChEBI" id="CHEBI:29105"/>
        <label>1</label>
    </ligand>
</feature>
<feature type="binding site" evidence="2">
    <location>
        <position position="365"/>
    </location>
    <ligand>
        <name>Zn(2+)</name>
        <dbReference type="ChEBI" id="CHEBI:29105"/>
        <label>1</label>
    </ligand>
</feature>
<feature type="binding site" evidence="2">
    <location>
        <position position="370"/>
    </location>
    <ligand>
        <name>Zn(2+)</name>
        <dbReference type="ChEBI" id="CHEBI:29105"/>
        <label>1</label>
    </ligand>
</feature>
<feature type="binding site" evidence="2">
    <location>
        <position position="379"/>
    </location>
    <ligand>
        <name>Zn(2+)</name>
        <dbReference type="ChEBI" id="CHEBI:29105"/>
        <label>2</label>
    </ligand>
</feature>
<feature type="binding site" evidence="2">
    <location>
        <position position="383"/>
    </location>
    <ligand>
        <name>Zn(2+)</name>
        <dbReference type="ChEBI" id="CHEBI:29105"/>
        <label>2</label>
    </ligand>
</feature>
<feature type="binding site" evidence="2">
    <location>
        <position position="389"/>
    </location>
    <ligand>
        <name>Zn(2+)</name>
        <dbReference type="ChEBI" id="CHEBI:29105"/>
        <label>2</label>
    </ligand>
</feature>
<feature type="binding site" evidence="2">
    <location>
        <position position="394"/>
    </location>
    <ligand>
        <name>Zn(2+)</name>
        <dbReference type="ChEBI" id="CHEBI:29105"/>
        <label>2</label>
    </ligand>
</feature>
<feature type="binding site" evidence="2">
    <location>
        <position position="403"/>
    </location>
    <ligand>
        <name>Zn(2+)</name>
        <dbReference type="ChEBI" id="CHEBI:29105"/>
        <label>3</label>
    </ligand>
</feature>
<feature type="binding site" evidence="2">
    <location>
        <position position="407"/>
    </location>
    <ligand>
        <name>Zn(2+)</name>
        <dbReference type="ChEBI" id="CHEBI:29105"/>
        <label>3</label>
    </ligand>
</feature>
<feature type="binding site" evidence="2">
    <location>
        <position position="412"/>
    </location>
    <ligand>
        <name>Zn(2+)</name>
        <dbReference type="ChEBI" id="CHEBI:29105"/>
        <label>3</label>
    </ligand>
</feature>
<feature type="binding site" evidence="2">
    <location>
        <position position="415"/>
    </location>
    <ligand>
        <name>Zn(2+)</name>
        <dbReference type="ChEBI" id="CHEBI:29105"/>
        <label>3</label>
    </ligand>
</feature>
<feature type="binding site" evidence="2">
    <location>
        <begin position="1397"/>
        <end position="1399"/>
    </location>
    <ligand>
        <name>acetyl-CoA</name>
        <dbReference type="ChEBI" id="CHEBI:57288"/>
    </ligand>
</feature>
<feature type="binding site" evidence="2">
    <location>
        <begin position="1409"/>
        <end position="1410"/>
    </location>
    <ligand>
        <name>acetyl-CoA</name>
        <dbReference type="ChEBI" id="CHEBI:57288"/>
    </ligand>
</feature>
<feature type="binding site" evidence="2">
    <location>
        <position position="1456"/>
    </location>
    <ligand>
        <name>acetyl-CoA</name>
        <dbReference type="ChEBI" id="CHEBI:57288"/>
    </ligand>
</feature>
<feature type="binding site" evidence="2">
    <location>
        <position position="1461"/>
    </location>
    <ligand>
        <name>acetyl-CoA</name>
        <dbReference type="ChEBI" id="CHEBI:57288"/>
    </ligand>
</feature>
<feature type="binding site" evidence="2">
    <location>
        <position position="1465"/>
    </location>
    <ligand>
        <name>acetyl-CoA</name>
        <dbReference type="ChEBI" id="CHEBI:57288"/>
    </ligand>
</feature>
<feature type="binding site" evidence="6">
    <location>
        <position position="1669"/>
    </location>
    <ligand>
        <name>Zn(2+)</name>
        <dbReference type="ChEBI" id="CHEBI:29105"/>
        <label>4</label>
    </ligand>
</feature>
<feature type="binding site" evidence="6">
    <location>
        <position position="1672"/>
    </location>
    <ligand>
        <name>Zn(2+)</name>
        <dbReference type="ChEBI" id="CHEBI:29105"/>
        <label>4</label>
    </ligand>
</feature>
<feature type="binding site" evidence="6">
    <location>
        <position position="1682"/>
    </location>
    <ligand>
        <name>Zn(2+)</name>
        <dbReference type="ChEBI" id="CHEBI:29105"/>
        <label>5</label>
    </ligand>
</feature>
<feature type="binding site" evidence="6">
    <location>
        <position position="1685"/>
    </location>
    <ligand>
        <name>Zn(2+)</name>
        <dbReference type="ChEBI" id="CHEBI:29105"/>
        <label>5</label>
    </ligand>
</feature>
<feature type="binding site" evidence="6">
    <location>
        <position position="1691"/>
    </location>
    <ligand>
        <name>Zn(2+)</name>
        <dbReference type="ChEBI" id="CHEBI:29105"/>
        <label>4</label>
    </ligand>
</feature>
<feature type="binding site" evidence="6">
    <location>
        <position position="1694"/>
    </location>
    <ligand>
        <name>Zn(2+)</name>
        <dbReference type="ChEBI" id="CHEBI:29105"/>
        <label>4</label>
    </ligand>
</feature>
<feature type="binding site" evidence="6">
    <location>
        <position position="1700"/>
    </location>
    <ligand>
        <name>Zn(2+)</name>
        <dbReference type="ChEBI" id="CHEBI:29105"/>
        <label>5</label>
    </ligand>
</feature>
<feature type="binding site" evidence="6">
    <location>
        <position position="1702"/>
    </location>
    <ligand>
        <name>Zn(2+)</name>
        <dbReference type="ChEBI" id="CHEBI:29105"/>
        <label>5</label>
    </ligand>
</feature>
<feature type="site" description="Interaction with NCOA2" evidence="2">
    <location>
        <position position="2089"/>
    </location>
</feature>
<feature type="site" description="Interaction with NCOA2" evidence="2">
    <location>
        <position position="2143"/>
    </location>
</feature>
<feature type="modified residue" description="N-acetylalanine" evidence="2">
    <location>
        <position position="2"/>
    </location>
</feature>
<feature type="modified residue" description="Phosphoserine; by AMPK" evidence="2">
    <location>
        <position position="89"/>
    </location>
</feature>
<feature type="modified residue" description="N6-acetyllysine" evidence="2">
    <location>
        <position position="419"/>
    </location>
</feature>
<feature type="modified residue" description="N6-acetyllysine" evidence="2">
    <location>
        <position position="424"/>
    </location>
</feature>
<feature type="modified residue" description="Phosphoserine" evidence="30">
    <location>
        <position position="500"/>
    </location>
</feature>
<feature type="modified residue" description="Asymmetric dimethylarginine; by CARM1" evidence="2">
    <location>
        <position position="581"/>
    </location>
</feature>
<feature type="modified residue" description="Asymmetric dimethylarginine; by CARM1" evidence="2">
    <location>
        <position position="605"/>
    </location>
</feature>
<feature type="modified residue" description="N6-acetyllysine" evidence="2">
    <location>
        <position position="637"/>
    </location>
</feature>
<feature type="modified residue" description="N6-acetyllysine" evidence="2">
    <location>
        <position position="976"/>
    </location>
</feature>
<feature type="modified residue" description="N6-acetyllysine; alternate" evidence="2">
    <location>
        <position position="1019"/>
    </location>
</feature>
<feature type="modified residue" description="N6-acetyllysine; alternate" evidence="2">
    <location>
        <position position="1023"/>
    </location>
</feature>
<feature type="modified residue" description="Phosphoserine" evidence="2">
    <location>
        <position position="1037"/>
    </location>
</feature>
<feature type="modified residue" description="N6-acetyllysine" evidence="31">
    <location>
        <position position="1179"/>
    </location>
</feature>
<feature type="modified residue" description="N6-acetyllysine" evidence="2">
    <location>
        <position position="1335"/>
    </location>
</feature>
<feature type="modified residue" description="N6-acetyllysine" evidence="2">
    <location>
        <position position="1472"/>
    </location>
</feature>
<feature type="modified residue" description="N6-acetyllysine; by autocatalysis" evidence="2">
    <location>
        <position position="1498"/>
    </location>
</feature>
<feature type="modified residue" description="N6-acetyllysine" evidence="2">
    <location>
        <position position="1541"/>
    </location>
</feature>
<feature type="modified residue" description="N6-acetyllysine" evidence="2">
    <location>
        <position position="1545"/>
    </location>
</feature>
<feature type="modified residue" description="N6-acetyllysine; by autocatalysis" evidence="2">
    <location>
        <position position="1548"/>
    </location>
</feature>
<feature type="modified residue" description="N6-acetyllysine; by autocatalysis" evidence="2">
    <location>
        <position position="1553"/>
    </location>
</feature>
<feature type="modified residue" description="N6-acetyllysine" evidence="2">
    <location>
        <position position="1554"/>
    </location>
</feature>
<feature type="modified residue" description="N6-acetyllysine" evidence="31">
    <location>
        <position position="1557"/>
    </location>
</feature>
<feature type="modified residue" description="N6-acetyllysine" evidence="31">
    <location>
        <position position="1559"/>
    </location>
</feature>
<feature type="modified residue" description="N6-acetyllysine" evidence="2">
    <location>
        <position position="1582"/>
    </location>
</feature>
<feature type="modified residue" description="N6-acetyllysine" evidence="2">
    <location>
        <position position="1698"/>
    </location>
</feature>
<feature type="modified residue" description="N6-acetyllysine" evidence="2">
    <location>
        <position position="1703"/>
    </location>
</feature>
<feature type="modified residue" description="N6-acetyllysine" evidence="2">
    <location>
        <position position="1706"/>
    </location>
</feature>
<feature type="modified residue" description="Phosphoserine" evidence="2">
    <location>
        <position position="1725"/>
    </location>
</feature>
<feature type="modified residue" description="Asymmetric dimethylarginine; by CARM1; alternate" evidence="2">
    <location>
        <position position="2143"/>
    </location>
</feature>
<feature type="modified residue" description="Citrulline; by PADI4; alternate" evidence="2">
    <location>
        <position position="2143"/>
    </location>
</feature>
<feature type="cross-link" description="Glycyl lysine isopeptide (Lys-Gly) (interchain with G-Cter in SUMO)" evidence="2">
    <location>
        <position position="1019"/>
    </location>
</feature>
<feature type="cross-link" description="Glycyl lysine isopeptide (Lys-Gly) (interchain with G-Cter in SUMO)" evidence="2">
    <location>
        <position position="1023"/>
    </location>
</feature>
<feature type="sequence conflict" description="In Ref. 2; AAI44977/AAI50682." evidence="27" ref="2">
    <original>G</original>
    <variation>E</variation>
    <location>
        <position position="677"/>
    </location>
</feature>
<feature type="sequence conflict" description="In Ref. 2; AAI44977/AAI50682." evidence="27" ref="2">
    <original>Q</original>
    <variation>QQQQ</variation>
    <location>
        <position position="2217"/>
    </location>
</feature>
<evidence type="ECO:0000250" key="1"/>
<evidence type="ECO:0000250" key="2">
    <source>
        <dbReference type="UniProtKB" id="Q09472"/>
    </source>
</evidence>
<evidence type="ECO:0000255" key="3"/>
<evidence type="ECO:0000255" key="4">
    <source>
        <dbReference type="PROSITE-ProRule" id="PRU00035"/>
    </source>
</evidence>
<evidence type="ECO:0000255" key="5">
    <source>
        <dbReference type="PROSITE-ProRule" id="PRU00203"/>
    </source>
</evidence>
<evidence type="ECO:0000255" key="6">
    <source>
        <dbReference type="PROSITE-ProRule" id="PRU00228"/>
    </source>
</evidence>
<evidence type="ECO:0000255" key="7">
    <source>
        <dbReference type="PROSITE-ProRule" id="PRU00311"/>
    </source>
</evidence>
<evidence type="ECO:0000255" key="8">
    <source>
        <dbReference type="PROSITE-ProRule" id="PRU01065"/>
    </source>
</evidence>
<evidence type="ECO:0000256" key="9">
    <source>
        <dbReference type="SAM" id="MobiDB-lite"/>
    </source>
</evidence>
<evidence type="ECO:0000269" key="10">
    <source>
    </source>
</evidence>
<evidence type="ECO:0000269" key="11">
    <source>
    </source>
</evidence>
<evidence type="ECO:0000269" key="12">
    <source>
    </source>
</evidence>
<evidence type="ECO:0000269" key="13">
    <source>
    </source>
</evidence>
<evidence type="ECO:0000269" key="14">
    <source>
    </source>
</evidence>
<evidence type="ECO:0000269" key="15">
    <source>
    </source>
</evidence>
<evidence type="ECO:0000269" key="16">
    <source>
    </source>
</evidence>
<evidence type="ECO:0000269" key="17">
    <source>
    </source>
</evidence>
<evidence type="ECO:0000269" key="18">
    <source>
    </source>
</evidence>
<evidence type="ECO:0000269" key="19">
    <source>
    </source>
</evidence>
<evidence type="ECO:0000269" key="20">
    <source>
    </source>
</evidence>
<evidence type="ECO:0000269" key="21">
    <source>
    </source>
</evidence>
<evidence type="ECO:0000269" key="22">
    <source>
    </source>
</evidence>
<evidence type="ECO:0000269" key="23">
    <source>
    </source>
</evidence>
<evidence type="ECO:0000269" key="24">
    <source>
    </source>
</evidence>
<evidence type="ECO:0000269" key="25">
    <source>
    </source>
</evidence>
<evidence type="ECO:0000269" key="26">
    <source>
    </source>
</evidence>
<evidence type="ECO:0000305" key="27"/>
<evidence type="ECO:0000305" key="28">
    <source>
    </source>
</evidence>
<evidence type="ECO:0000305" key="29">
    <source>
    </source>
</evidence>
<evidence type="ECO:0007744" key="30">
    <source>
    </source>
</evidence>
<evidence type="ECO:0007744" key="31">
    <source>
    </source>
</evidence>